<protein>
    <recommendedName>
        <fullName>Angiopoietin-1 receptor</fullName>
        <ecNumber evidence="12 17">2.7.10.1</ecNumber>
    </recommendedName>
    <alternativeName>
        <fullName>Endothelial tyrosine kinase</fullName>
    </alternativeName>
    <alternativeName>
        <fullName>Tunica interna endothelial cell kinase</fullName>
    </alternativeName>
    <alternativeName>
        <fullName>Tyrosine kinase with Ig and EGF homology domains-2</fullName>
    </alternativeName>
    <alternativeName>
        <fullName>Tyrosine-protein kinase receptor TEK</fullName>
    </alternativeName>
    <alternativeName>
        <fullName>Tyrosine-protein kinase receptor TIE-2</fullName>
        <shortName>hTIE2</shortName>
    </alternativeName>
    <alternativeName>
        <fullName>p140 TEK</fullName>
    </alternativeName>
    <cdAntigenName>CD202b</cdAntigenName>
</protein>
<accession>Q02763</accession>
<accession>A8K6W0</accession>
<accession>B4DH20</accession>
<accession>B4DHD3</accession>
<accession>D3DRK5</accession>
<accession>E7EWI2</accession>
<accession>Q5TCU2</accession>
<accession>Q8IV34</accession>
<comment type="function">
    <text evidence="11 12 14 17 23 24 25 28 33 38">Tyrosine-protein kinase that acts as a cell-surface receptor for ANGPT1, ANGPT2 and ANGPT4 and regulates angiogenesis, endothelial cell survival, proliferation, migration, adhesion and cell spreading, reorganization of the actin cytoskeleton, but also maintenance of vascular quiescence. Has anti-inflammatory effects by preventing the leakage of pro-inflammatory plasma proteins and leukocytes from blood vessels. Required for normal angiogenesis and heart development during embryogenesis. Required for post-natal hematopoiesis. After birth, activates or inhibits angiogenesis, depending on the context. Inhibits angiogenesis and promotes vascular stability in quiescent vessels, where endothelial cells have tight contacts. In quiescent vessels, ANGPT1 oligomers recruit TEK to cell-cell contacts, forming complexes with TEK molecules from adjoining cells, and this leads to preferential activation of phosphatidylinositol 3-kinase and the AKT1 signaling cascades. In migrating endothelial cells that lack cell-cell adhesions, ANGT1 recruits TEK to contacts with the extracellular matrix, leading to the formation of focal adhesion complexes, activation of PTK2/FAK and of the downstream kinases MAPK1/ERK2 and MAPK3/ERK1, and ultimately to the stimulation of sprouting angiogenesis. ANGPT1 signaling triggers receptor dimerization and autophosphorylation at specific tyrosine residues that then serve as binding sites for scaffold proteins and effectors. Signaling is modulated by ANGPT2 that has lower affinity for TEK, can promote TEK autophosphorylation in the absence of ANGPT1, but inhibits ANGPT1-mediated signaling by competing for the same binding site. Signaling is also modulated by formation of heterodimers with TIE1, and by proteolytic processing that gives rise to a soluble TEK extracellular domain. The soluble extracellular domain modulates signaling by functioning as decoy receptor for angiopoietins. TEK phosphorylates DOK2, GRB7, GRB14, PIK3R1; SHC1 and TIE1.</text>
</comment>
<comment type="catalytic activity">
    <reaction evidence="5 8 10 12 17 28 36">
        <text>L-tyrosyl-[protein] + ATP = O-phospho-L-tyrosyl-[protein] + ADP + H(+)</text>
        <dbReference type="Rhea" id="RHEA:10596"/>
        <dbReference type="Rhea" id="RHEA-COMP:10136"/>
        <dbReference type="Rhea" id="RHEA-COMP:20101"/>
        <dbReference type="ChEBI" id="CHEBI:15378"/>
        <dbReference type="ChEBI" id="CHEBI:30616"/>
        <dbReference type="ChEBI" id="CHEBI:46858"/>
        <dbReference type="ChEBI" id="CHEBI:61978"/>
        <dbReference type="ChEBI" id="CHEBI:456216"/>
        <dbReference type="EC" id="2.7.10.1"/>
    </reaction>
</comment>
<comment type="activity regulation">
    <text evidence="7 8 20 22 31 33">Angiopoietin binding leads to receptor dimerization and activation by autophosphorylation at Tyr-992 on the kinase activation loop. Inhibited by staurosporine, K252a, PP2, damnacanthal, SB203580, CEP-11207, CEP-11981 and CE-245677. Inhibited by triazine, thienopyrimidine and thiazolopyrimidine derivatives.</text>
</comment>
<comment type="subunit">
    <text evidence="10 12 14 17 18 20 22 24 29 30 31 35 38 39">Homodimer. Heterodimer with TIE1. Interacts with ANGPT1, ANGPT2 and ANGPT4 (PubMed:15284220, PubMed:32908006, PubMed:9204896). At cell-cell contacts in quiescent cells, forms a signaling complex composed of ANGPT1 plus TEK molecules from two adjoining cells. In the absence of endothelial cell-cell contacts, interaction with ANGPT1 mediates contacts with the extracellular matrix. Interacts with PTPRB; this promotes endothelial cell-cell adhesion. Interacts with DOK2, GRB2, GRB7, GRB14, PIK3R1 and PTPN11/SHP2. Colocalizes with DOK2 at contacts with the extracellular matrix in migrating cells. Interacts (tyrosine phosphorylated) with TNIP2. Interacts (tyrosine phosphorylated) with SHC1 (via SH2 domain).</text>
</comment>
<comment type="interaction">
    <interactant intactId="EBI-2257090">
        <id>Q02763</id>
    </interactant>
    <interactant intactId="EBI-2922365">
        <id>Q15389</id>
        <label>ANGPT1</label>
    </interactant>
    <organismsDiffer>false</organismsDiffer>
    <experiments>2</experiments>
</comment>
<comment type="interaction">
    <interactant intactId="EBI-2257090">
        <id>Q02763</id>
    </interactant>
    <interactant intactId="EBI-2912111">
        <id>O15123</id>
        <label>ANGPT2</label>
    </interactant>
    <organismsDiffer>false</organismsDiffer>
    <experiments>4</experiments>
</comment>
<comment type="interaction">
    <interactant intactId="EBI-2257090">
        <id>Q02763</id>
    </interactant>
    <interactant intactId="EBI-15552475">
        <id>O15123-1</id>
        <label>ANGPT2</label>
    </interactant>
    <organismsDiffer>false</organismsDiffer>
    <experiments>5</experiments>
</comment>
<comment type="interaction">
    <interactant intactId="EBI-2257090">
        <id>Q02763</id>
    </interactant>
    <interactant intactId="EBI-1055133">
        <id>Q16678</id>
        <label>CYP1B1</label>
    </interactant>
    <organismsDiffer>false</organismsDiffer>
    <experiments>6</experiments>
</comment>
<comment type="interaction">
    <interactant intactId="EBI-2257090">
        <id>Q02763</id>
    </interactant>
    <interactant intactId="EBI-2266035">
        <id>Q05209</id>
        <label>PTPN12</label>
    </interactant>
    <organismsDiffer>false</organismsDiffer>
    <experiments>2</experiments>
</comment>
<comment type="interaction">
    <interactant intactId="EBI-2257090">
        <id>Q02763</id>
    </interactant>
    <interactant intactId="EBI-1265766">
        <id>P23467</id>
        <label>PTPRB</label>
    </interactant>
    <organismsDiffer>false</organismsDiffer>
    <experiments>3</experiments>
</comment>
<comment type="interaction">
    <interactant intactId="EBI-2257090">
        <id>Q02763</id>
    </interactant>
    <interactant intactId="EBI-1341">
        <id>P08575</id>
        <label>PTPRC</label>
    </interactant>
    <organismsDiffer>false</organismsDiffer>
    <experiments>3</experiments>
</comment>
<comment type="interaction">
    <interactant intactId="EBI-2257090">
        <id>Q02763</id>
    </interactant>
    <interactant intactId="EBI-2264500">
        <id>Q12913</id>
        <label>PTPRJ</label>
    </interactant>
    <organismsDiffer>false</organismsDiffer>
    <experiments>2</experiments>
</comment>
<comment type="interaction">
    <interactant intactId="EBI-2257090">
        <id>Q02763</id>
    </interactant>
    <interactant intactId="EBI-474052">
        <id>Q15262</id>
        <label>PTPRK</label>
    </interactant>
    <organismsDiffer>false</organismsDiffer>
    <experiments>2</experiments>
</comment>
<comment type="interaction">
    <interactant intactId="EBI-2257090">
        <id>Q02763</id>
    </interactant>
    <interactant intactId="EBI-723739">
        <id>Q16827</id>
        <label>PTPRO</label>
    </interactant>
    <organismsDiffer>false</organismsDiffer>
    <experiments>2</experiments>
</comment>
<comment type="subcellular location">
    <subcellularLocation>
        <location evidence="24 25 26 34">Cell membrane</location>
        <topology>Single-pass type I membrane protein</topology>
    </subcellularLocation>
    <subcellularLocation>
        <location evidence="24 25 34">Cell junction</location>
    </subcellularLocation>
    <subcellularLocation>
        <location evidence="45">Cell junction</location>
        <location evidence="45">Focal adhesion</location>
    </subcellularLocation>
    <subcellularLocation>
        <location>Cytoplasm</location>
        <location>Cytoskeleton</location>
    </subcellularLocation>
    <subcellularLocation>
        <location evidence="9">Secreted</location>
    </subcellularLocation>
    <text evidence="9 24 25">Recruited to cell-cell contacts in quiescent endothelial cells (PubMed:18425119, PubMed:18425120). Colocalizes with the actin cytoskeleton and at actin stress fibers during cell spreading. Recruited to the lower surface of migrating cells, especially the rear end of the cell. Proteolytic processing gives rise to a soluble extracellular domain that is secreted (PubMed:11806244).</text>
</comment>
<comment type="alternative products">
    <event type="alternative splicing"/>
    <isoform>
        <id>Q02763-1</id>
        <name>1</name>
        <sequence type="displayed"/>
    </isoform>
    <isoform>
        <id>Q02763-2</id>
        <name>2</name>
        <sequence type="described" ref="VSP_042138"/>
    </isoform>
    <isoform>
        <id>Q02763-3</id>
        <name>3</name>
        <sequence type="described" ref="VSP_042137 VSP_042138 VSP_042139"/>
    </isoform>
</comment>
<comment type="tissue specificity">
    <text evidence="9 36">Detected in umbilical vein endothelial cells. Proteolytic processing gives rise to a soluble extracellular domain that is detected in blood plasma (at protein level). Predominantly expressed in endothelial cells and their progenitors, the angioblasts. Has been directly found in placenta and lung, with a lower level in umbilical vein endothelial cells, brain and kidney.</text>
</comment>
<comment type="domain">
    <text evidence="14">The soluble extracellular domain is functionally active in angiopoietin binding and can modulate the activity of the membrane-bound form by competing for angiopoietins.</text>
</comment>
<comment type="PTM">
    <text evidence="9">Proteolytic processing leads to the shedding of the extracellular domain (soluble TIE-2 alias sTIE-2).</text>
</comment>
<comment type="PTM">
    <text evidence="8 12">Autophosphorylated on tyrosine residues in response to ligand binding. Autophosphorylation occurs in trans, i.e. one subunit of the dimeric receptor phosphorylates tyrosine residues on the other subunit. Autophosphorylation occurs in a sequential manner, where Tyr-992 in the kinase activation loop is phosphorylated first, followed by autophosphorylation at Tyr-1108 and at additional tyrosine residues. ANGPT1-induced phosphorylation is impaired during hypoxia, due to increased expression of ANGPT2. Phosphorylation is important for interaction with GRB14, PIK3R1 and PTPN11. Phosphorylation at Tyr-1102 is important for interaction with SHC1, GRB2 and GRB7. Phosphorylation at Tyr-1108 is important for interaction with DOK2 and for coupling to downstream signal transduction pathways in endothelial cells. Dephosphorylated by PTPRB.</text>
</comment>
<comment type="PTM">
    <text evidence="30">Ubiquitinated. The phosphorylated receptor is ubiquitinated and internalized, leading to its degradation.</text>
</comment>
<comment type="disease" evidence="6 26 32 37">
    <disease id="DI-01500">
        <name>Dominantly inherited venous malformations</name>
        <acronym>VMCM</acronym>
        <description>An error of vascular morphogenesis characterized by dilated, serpiginous channels.</description>
        <dbReference type="MIM" id="600195"/>
    </disease>
    <text>The disease is caused by variants affecting the gene represented in this entry.</text>
</comment>
<comment type="disease">
    <text evidence="26">Somatic mutations of TEK are associated with solitary and multiple sporadic venous malformations.</text>
</comment>
<comment type="disease">
    <text>May play a role in a range of diseases with a vascular component, including neovascularization of tumors, psoriasis and inflammation.</text>
</comment>
<comment type="disease" evidence="34">
    <disease id="DI-04901">
        <name>Glaucoma 3, primary congenital, E</name>
        <acronym>GLC3E</acronym>
        <description>An autosomal dominant form of primary congenital glaucoma (PCG). PCG is characterized by marked increase of intraocular pressure at birth or early childhood, large ocular globes (buphthalmos) and corneal edema. It results from developmental defects of the trabecular meshwork and anterior chamber angle of the eye that prevent adequate drainage of aqueous humor.</description>
        <dbReference type="MIM" id="617272"/>
    </disease>
    <text>The disease is caused by variants affecting the gene represented in this entry.</text>
</comment>
<comment type="similarity">
    <text evidence="3">Belongs to the protein kinase superfamily. Tyr protein kinase family. Tie subfamily.</text>
</comment>
<comment type="online information" name="Atlas of Genetics and Cytogenetics in Oncology and Haematology">
    <link uri="https://atlasgeneticsoncology.org/gene/42517/TEK"/>
</comment>
<reference key="1">
    <citation type="journal article" date="1993" name="Oncogene">
        <title>Molecular cloning and characterization of a novel receptor protein tyrosine kinase from human placenta.</title>
        <authorList>
            <person name="Ziegler S.F."/>
            <person name="Bird T.A."/>
            <person name="Schneringer J.A."/>
            <person name="Schooley K.A."/>
            <person name="Baum P.R."/>
        </authorList>
    </citation>
    <scope>NUCLEOTIDE SEQUENCE [MRNA] (ISOFORM 1)</scope>
    <scope>CATALYTIC ACTIVITY</scope>
    <scope>TISSUE SPECIFICITY</scope>
    <scope>VARIANT PRO-346</scope>
    <source>
        <tissue>Placenta</tissue>
    </source>
</reference>
<reference key="2">
    <citation type="journal article" date="2004" name="Nat. Genet.">
        <title>Complete sequencing and characterization of 21,243 full-length human cDNAs.</title>
        <authorList>
            <person name="Ota T."/>
            <person name="Suzuki Y."/>
            <person name="Nishikawa T."/>
            <person name="Otsuki T."/>
            <person name="Sugiyama T."/>
            <person name="Irie R."/>
            <person name="Wakamatsu A."/>
            <person name="Hayashi K."/>
            <person name="Sato H."/>
            <person name="Nagai K."/>
            <person name="Kimura K."/>
            <person name="Makita H."/>
            <person name="Sekine M."/>
            <person name="Obayashi M."/>
            <person name="Nishi T."/>
            <person name="Shibahara T."/>
            <person name="Tanaka T."/>
            <person name="Ishii S."/>
            <person name="Yamamoto J."/>
            <person name="Saito K."/>
            <person name="Kawai Y."/>
            <person name="Isono Y."/>
            <person name="Nakamura Y."/>
            <person name="Nagahari K."/>
            <person name="Murakami K."/>
            <person name="Yasuda T."/>
            <person name="Iwayanagi T."/>
            <person name="Wagatsuma M."/>
            <person name="Shiratori A."/>
            <person name="Sudo H."/>
            <person name="Hosoiri T."/>
            <person name="Kaku Y."/>
            <person name="Kodaira H."/>
            <person name="Kondo H."/>
            <person name="Sugawara M."/>
            <person name="Takahashi M."/>
            <person name="Kanda K."/>
            <person name="Yokoi T."/>
            <person name="Furuya T."/>
            <person name="Kikkawa E."/>
            <person name="Omura Y."/>
            <person name="Abe K."/>
            <person name="Kamihara K."/>
            <person name="Katsuta N."/>
            <person name="Sato K."/>
            <person name="Tanikawa M."/>
            <person name="Yamazaki M."/>
            <person name="Ninomiya K."/>
            <person name="Ishibashi T."/>
            <person name="Yamashita H."/>
            <person name="Murakawa K."/>
            <person name="Fujimori K."/>
            <person name="Tanai H."/>
            <person name="Kimata M."/>
            <person name="Watanabe M."/>
            <person name="Hiraoka S."/>
            <person name="Chiba Y."/>
            <person name="Ishida S."/>
            <person name="Ono Y."/>
            <person name="Takiguchi S."/>
            <person name="Watanabe S."/>
            <person name="Yosida M."/>
            <person name="Hotuta T."/>
            <person name="Kusano J."/>
            <person name="Kanehori K."/>
            <person name="Takahashi-Fujii A."/>
            <person name="Hara H."/>
            <person name="Tanase T.-O."/>
            <person name="Nomura Y."/>
            <person name="Togiya S."/>
            <person name="Komai F."/>
            <person name="Hara R."/>
            <person name="Takeuchi K."/>
            <person name="Arita M."/>
            <person name="Imose N."/>
            <person name="Musashino K."/>
            <person name="Yuuki H."/>
            <person name="Oshima A."/>
            <person name="Sasaki N."/>
            <person name="Aotsuka S."/>
            <person name="Yoshikawa Y."/>
            <person name="Matsunawa H."/>
            <person name="Ichihara T."/>
            <person name="Shiohata N."/>
            <person name="Sano S."/>
            <person name="Moriya S."/>
            <person name="Momiyama H."/>
            <person name="Satoh N."/>
            <person name="Takami S."/>
            <person name="Terashima Y."/>
            <person name="Suzuki O."/>
            <person name="Nakagawa S."/>
            <person name="Senoh A."/>
            <person name="Mizoguchi H."/>
            <person name="Goto Y."/>
            <person name="Shimizu F."/>
            <person name="Wakebe H."/>
            <person name="Hishigaki H."/>
            <person name="Watanabe T."/>
            <person name="Sugiyama A."/>
            <person name="Takemoto M."/>
            <person name="Kawakami B."/>
            <person name="Yamazaki M."/>
            <person name="Watanabe K."/>
            <person name="Kumagai A."/>
            <person name="Itakura S."/>
            <person name="Fukuzumi Y."/>
            <person name="Fujimori Y."/>
            <person name="Komiyama M."/>
            <person name="Tashiro H."/>
            <person name="Tanigami A."/>
            <person name="Fujiwara T."/>
            <person name="Ono T."/>
            <person name="Yamada K."/>
            <person name="Fujii Y."/>
            <person name="Ozaki K."/>
            <person name="Hirao M."/>
            <person name="Ohmori Y."/>
            <person name="Kawabata A."/>
            <person name="Hikiji T."/>
            <person name="Kobatake N."/>
            <person name="Inagaki H."/>
            <person name="Ikema Y."/>
            <person name="Okamoto S."/>
            <person name="Okitani R."/>
            <person name="Kawakami T."/>
            <person name="Noguchi S."/>
            <person name="Itoh T."/>
            <person name="Shigeta K."/>
            <person name="Senba T."/>
            <person name="Matsumura K."/>
            <person name="Nakajima Y."/>
            <person name="Mizuno T."/>
            <person name="Morinaga M."/>
            <person name="Sasaki M."/>
            <person name="Togashi T."/>
            <person name="Oyama M."/>
            <person name="Hata H."/>
            <person name="Watanabe M."/>
            <person name="Komatsu T."/>
            <person name="Mizushima-Sugano J."/>
            <person name="Satoh T."/>
            <person name="Shirai Y."/>
            <person name="Takahashi Y."/>
            <person name="Nakagawa K."/>
            <person name="Okumura K."/>
            <person name="Nagase T."/>
            <person name="Nomura N."/>
            <person name="Kikuchi H."/>
            <person name="Masuho Y."/>
            <person name="Yamashita R."/>
            <person name="Nakai K."/>
            <person name="Yada T."/>
            <person name="Nakamura Y."/>
            <person name="Ohara O."/>
            <person name="Isogai T."/>
            <person name="Sugano S."/>
        </authorList>
    </citation>
    <scope>NUCLEOTIDE SEQUENCE [LARGE SCALE MRNA] (ISOFORMS 1; 2 AND 3)</scope>
    <scope>VARIANT PRO-346</scope>
    <source>
        <tissue>Brain</tissue>
        <tissue>Placenta</tissue>
    </source>
</reference>
<reference key="3">
    <citation type="journal article" date="2004" name="Nature">
        <title>DNA sequence and analysis of human chromosome 9.</title>
        <authorList>
            <person name="Humphray S.J."/>
            <person name="Oliver K."/>
            <person name="Hunt A.R."/>
            <person name="Plumb R.W."/>
            <person name="Loveland J.E."/>
            <person name="Howe K.L."/>
            <person name="Andrews T.D."/>
            <person name="Searle S."/>
            <person name="Hunt S.E."/>
            <person name="Scott C.E."/>
            <person name="Jones M.C."/>
            <person name="Ainscough R."/>
            <person name="Almeida J.P."/>
            <person name="Ambrose K.D."/>
            <person name="Ashwell R.I.S."/>
            <person name="Babbage A.K."/>
            <person name="Babbage S."/>
            <person name="Bagguley C.L."/>
            <person name="Bailey J."/>
            <person name="Banerjee R."/>
            <person name="Barker D.J."/>
            <person name="Barlow K.F."/>
            <person name="Bates K."/>
            <person name="Beasley H."/>
            <person name="Beasley O."/>
            <person name="Bird C.P."/>
            <person name="Bray-Allen S."/>
            <person name="Brown A.J."/>
            <person name="Brown J.Y."/>
            <person name="Burford D."/>
            <person name="Burrill W."/>
            <person name="Burton J."/>
            <person name="Carder C."/>
            <person name="Carter N.P."/>
            <person name="Chapman J.C."/>
            <person name="Chen Y."/>
            <person name="Clarke G."/>
            <person name="Clark S.Y."/>
            <person name="Clee C.M."/>
            <person name="Clegg S."/>
            <person name="Collier R.E."/>
            <person name="Corby N."/>
            <person name="Crosier M."/>
            <person name="Cummings A.T."/>
            <person name="Davies J."/>
            <person name="Dhami P."/>
            <person name="Dunn M."/>
            <person name="Dutta I."/>
            <person name="Dyer L.W."/>
            <person name="Earthrowl M.E."/>
            <person name="Faulkner L."/>
            <person name="Fleming C.J."/>
            <person name="Frankish A."/>
            <person name="Frankland J.A."/>
            <person name="French L."/>
            <person name="Fricker D.G."/>
            <person name="Garner P."/>
            <person name="Garnett J."/>
            <person name="Ghori J."/>
            <person name="Gilbert J.G.R."/>
            <person name="Glison C."/>
            <person name="Grafham D.V."/>
            <person name="Gribble S."/>
            <person name="Griffiths C."/>
            <person name="Griffiths-Jones S."/>
            <person name="Grocock R."/>
            <person name="Guy J."/>
            <person name="Hall R.E."/>
            <person name="Hammond S."/>
            <person name="Harley J.L."/>
            <person name="Harrison E.S.I."/>
            <person name="Hart E.A."/>
            <person name="Heath P.D."/>
            <person name="Henderson C.D."/>
            <person name="Hopkins B.L."/>
            <person name="Howard P.J."/>
            <person name="Howden P.J."/>
            <person name="Huckle E."/>
            <person name="Johnson C."/>
            <person name="Johnson D."/>
            <person name="Joy A.A."/>
            <person name="Kay M."/>
            <person name="Keenan S."/>
            <person name="Kershaw J.K."/>
            <person name="Kimberley A.M."/>
            <person name="King A."/>
            <person name="Knights A."/>
            <person name="Laird G.K."/>
            <person name="Langford C."/>
            <person name="Lawlor S."/>
            <person name="Leongamornlert D.A."/>
            <person name="Leversha M."/>
            <person name="Lloyd C."/>
            <person name="Lloyd D.M."/>
            <person name="Lovell J."/>
            <person name="Martin S."/>
            <person name="Mashreghi-Mohammadi M."/>
            <person name="Matthews L."/>
            <person name="McLaren S."/>
            <person name="McLay K.E."/>
            <person name="McMurray A."/>
            <person name="Milne S."/>
            <person name="Nickerson T."/>
            <person name="Nisbett J."/>
            <person name="Nordsiek G."/>
            <person name="Pearce A.V."/>
            <person name="Peck A.I."/>
            <person name="Porter K.M."/>
            <person name="Pandian R."/>
            <person name="Pelan S."/>
            <person name="Phillimore B."/>
            <person name="Povey S."/>
            <person name="Ramsey Y."/>
            <person name="Rand V."/>
            <person name="Scharfe M."/>
            <person name="Sehra H.K."/>
            <person name="Shownkeen R."/>
            <person name="Sims S.K."/>
            <person name="Skuce C.D."/>
            <person name="Smith M."/>
            <person name="Steward C.A."/>
            <person name="Swarbreck D."/>
            <person name="Sycamore N."/>
            <person name="Tester J."/>
            <person name="Thorpe A."/>
            <person name="Tracey A."/>
            <person name="Tromans A."/>
            <person name="Thomas D.W."/>
            <person name="Wall M."/>
            <person name="Wallis J.M."/>
            <person name="West A.P."/>
            <person name="Whitehead S.L."/>
            <person name="Willey D.L."/>
            <person name="Williams S.A."/>
            <person name="Wilming L."/>
            <person name="Wray P.W."/>
            <person name="Young L."/>
            <person name="Ashurst J.L."/>
            <person name="Coulson A."/>
            <person name="Blocker H."/>
            <person name="Durbin R.M."/>
            <person name="Sulston J.E."/>
            <person name="Hubbard T."/>
            <person name="Jackson M.J."/>
            <person name="Bentley D.R."/>
            <person name="Beck S."/>
            <person name="Rogers J."/>
            <person name="Dunham I."/>
        </authorList>
    </citation>
    <scope>NUCLEOTIDE SEQUENCE [LARGE SCALE GENOMIC DNA]</scope>
</reference>
<reference key="4">
    <citation type="submission" date="2005-09" db="EMBL/GenBank/DDBJ databases">
        <authorList>
            <person name="Mural R.J."/>
            <person name="Istrail S."/>
            <person name="Sutton G.G."/>
            <person name="Florea L."/>
            <person name="Halpern A.L."/>
            <person name="Mobarry C.M."/>
            <person name="Lippert R."/>
            <person name="Walenz B."/>
            <person name="Shatkay H."/>
            <person name="Dew I."/>
            <person name="Miller J.R."/>
            <person name="Flanigan M.J."/>
            <person name="Edwards N.J."/>
            <person name="Bolanos R."/>
            <person name="Fasulo D."/>
            <person name="Halldorsson B.V."/>
            <person name="Hannenhalli S."/>
            <person name="Turner R."/>
            <person name="Yooseph S."/>
            <person name="Lu F."/>
            <person name="Nusskern D.R."/>
            <person name="Shue B.C."/>
            <person name="Zheng X.H."/>
            <person name="Zhong F."/>
            <person name="Delcher A.L."/>
            <person name="Huson D.H."/>
            <person name="Kravitz S.A."/>
            <person name="Mouchard L."/>
            <person name="Reinert K."/>
            <person name="Remington K.A."/>
            <person name="Clark A.G."/>
            <person name="Waterman M.S."/>
            <person name="Eichler E.E."/>
            <person name="Adams M.D."/>
            <person name="Hunkapiller M.W."/>
            <person name="Myers E.W."/>
            <person name="Venter J.C."/>
        </authorList>
    </citation>
    <scope>NUCLEOTIDE SEQUENCE [LARGE SCALE GENOMIC DNA]</scope>
    <scope>VARIANT PRO-346</scope>
</reference>
<reference key="5">
    <citation type="journal article" date="2004" name="Genome Res.">
        <title>The status, quality, and expansion of the NIH full-length cDNA project: the Mammalian Gene Collection (MGC).</title>
        <authorList>
            <consortium name="The MGC Project Team"/>
        </authorList>
    </citation>
    <scope>NUCLEOTIDE SEQUENCE [LARGE SCALE MRNA] (ISOFORM 1)</scope>
    <scope>VARIANT PRO-346</scope>
    <source>
        <tissue>Pancreas</tissue>
    </source>
</reference>
<reference key="6">
    <citation type="journal article" date="2004" name="Protein Sci.">
        <title>Signal peptide prediction based on analysis of experimentally verified cleavage sites.</title>
        <authorList>
            <person name="Zhang Z."/>
            <person name="Henzel W.J."/>
        </authorList>
    </citation>
    <scope>PROTEIN SEQUENCE OF 23-37</scope>
</reference>
<reference key="7">
    <citation type="journal article" date="1997" name="Science">
        <title>Angiopoietin-2, a natural antagonist for Tie2 that disrupts in vivo angiogenesis.</title>
        <authorList>
            <person name="Maisonpierre P.C."/>
            <person name="Suri C."/>
            <person name="Jones P.F."/>
            <person name="Bartunkova S."/>
            <person name="Wiegand S.J."/>
            <person name="Radziejewski C."/>
            <person name="Compton D.L."/>
            <person name="McClain J."/>
            <person name="Aldrich T.H."/>
            <person name="Papadopoulos N."/>
            <person name="Daly T.J."/>
            <person name="Davis S."/>
            <person name="Sato T.N."/>
            <person name="Yancopoulos G.D."/>
        </authorList>
    </citation>
    <scope>FUNCTION AS RECEPTOR FOR ANGPT1 AND ANGPT2</scope>
    <scope>INTERACTION WITH ANGPT1 AND ANGPT2</scope>
    <scope>AUTOPHOSPHORYLATION</scope>
</reference>
<reference key="8">
    <citation type="journal article" date="2001" name="Angiogenesis">
        <title>Identification of a soluble form of the angiopoietin receptor TIE-2 released from endothelial cells and present in human blood.</title>
        <authorList>
            <person name="Reusch P."/>
            <person name="Barleon B."/>
            <person name="Weindel K."/>
            <person name="Martiny-Baron G."/>
            <person name="Godde A."/>
            <person name="Siemeister G."/>
            <person name="Marme D."/>
        </authorList>
    </citation>
    <scope>SUBCELLULAR LOCATION</scope>
    <scope>PROTEOLYTIC PROCESSING</scope>
    <scope>TISSUE SPECIFICITY</scope>
</reference>
<reference key="9">
    <citation type="journal article" date="2001" name="Biochemistry">
        <title>Mechanistic effects of autophosphorylation on receptor tyrosine kinase catalysis: enzymatic characterization of Tie2 and phospho-Tie2.</title>
        <authorList>
            <person name="Murray B.W."/>
            <person name="Padrique E.S."/>
            <person name="Pinko C."/>
            <person name="McTigue M.A."/>
        </authorList>
    </citation>
    <scope>CATALYTIC ACTIVITY</scope>
    <scope>ACTIVITY REGULATION</scope>
    <scope>IDENTIFICATION BY MASS SPECTROMETRY</scope>
    <scope>PHOSPHORYLATION AT TYR-860; TYR-992 AND TYR-1108</scope>
</reference>
<reference key="10">
    <citation type="journal article" date="2003" name="Blood">
        <title>Tie-2-dependent activation of RhoA and Rac1 participates in endothelial cell motility triggered by angiopoietin-1.</title>
        <authorList>
            <person name="Cascone I."/>
            <person name="Audero E."/>
            <person name="Giraudo E."/>
            <person name="Napione L."/>
            <person name="Maniero F."/>
            <person name="Philips M.R."/>
            <person name="Collard J.G."/>
            <person name="Serini G."/>
            <person name="Bussolino F."/>
        </authorList>
    </citation>
    <scope>FUNCTION IN REGULATION OF PHOSPHATIDYLINOSITOL 3-KINASE ACTIVITY; ENDOTHELIAL CELL MIGRATION AND REORGANIZATION OF THE ACTIN CYTOSKELETON</scope>
</reference>
<reference key="11">
    <citation type="journal article" date="2003" name="Circ. Res.">
        <title>The antiinflammatory endothelial tyrosine kinase Tie2 interacts with a novel nuclear factor-kappaB inhibitor ABIN-2.</title>
        <authorList>
            <person name="Hughes D.P."/>
            <person name="Marron M.B."/>
            <person name="Brindle N.P."/>
        </authorList>
    </citation>
    <scope>INTERACTION WITH TNIP2</scope>
    <scope>AUTOPHOSPHORYLATION</scope>
    <scope>CATALYTIC ACTIVITY</scope>
    <scope>MUTAGENESIS OF LYS-855</scope>
</reference>
<reference key="12">
    <citation type="journal article" date="2004" name="FASEB J.">
        <title>Biological characterization of angiopoietin-3 and angiopoietin-4.</title>
        <authorList>
            <person name="Lee H.J."/>
            <person name="Cho C.H."/>
            <person name="Hwang S.J."/>
            <person name="Choi H.H."/>
            <person name="Kim K.T."/>
            <person name="Ahn S.Y."/>
            <person name="Kim J.H."/>
            <person name="Oh J.L."/>
            <person name="Lee G.M."/>
            <person name="Koh G.Y."/>
        </authorList>
    </citation>
    <scope>FUNCTION IN REGULATION OF ANGIOGENESIS; CELL SURVIVAL; CELL MIGRATION AND ACTIVATION OF AKT1</scope>
    <scope>DOMAIN</scope>
    <scope>INTERACTION WITH ANGPT1; ANGPT2 AND ANGPT4</scope>
</reference>
<reference key="13">
    <citation type="journal article" date="2004" name="J. Biol. Chem.">
        <title>Adaptor ShcA protein binds tyrosine kinase Tie2 receptor and regulates migration and sprouting but not survival of endothelial cells.</title>
        <authorList>
            <person name="Audero E."/>
            <person name="Cascone I."/>
            <person name="Maniero F."/>
            <person name="Napione L."/>
            <person name="Arese M."/>
            <person name="Lanfrancone L."/>
            <person name="Bussolino F."/>
        </authorList>
    </citation>
    <scope>FUNCTION AS ANGPT1 RECEPTOR IN PHOSPHORYLATION OF SHC1 AND PIK3R1; REGULATION OF CELL MIGRATION AND ANGIOGENESIS</scope>
    <scope>AUTOPHOSPHORYLATION</scope>
    <scope>MUTAGENESIS OF TYR-1102</scope>
    <scope>PHOSPHORYLATION AT TYR-1102</scope>
    <scope>CATALYTIC ACTIVITY</scope>
    <scope>INTERACTION WITH SHC1</scope>
</reference>
<reference key="14">
    <citation type="journal article" date="2005" name="J. Cell Biol.">
        <title>Multiple angiopoietin recombinant proteins activate the Tie1 receptor tyrosine kinase and promote its interaction with Tie2.</title>
        <authorList>
            <person name="Saharinen P."/>
            <person name="Kerkela K."/>
            <person name="Ekman N."/>
            <person name="Marron M."/>
            <person name="Brindle N."/>
            <person name="Lee G.M."/>
            <person name="Augustin H."/>
            <person name="Koh G.Y."/>
            <person name="Alitalo K."/>
        </authorList>
    </citation>
    <scope>INTERACTION WITH TIE1</scope>
    <scope>SUBCELLULAR LOCATION</scope>
    <scope>FUNCTION AS RECEPTOR FOR ANGPT1 IN PHOSPHORYLATION OF TIE1</scope>
    <scope>AUTOPHOSPHORYLATION</scope>
    <scope>CATALYTIC ACTIVITY</scope>
    <scope>MUTAGENESIS OF LYS-855</scope>
</reference>
<reference key="15">
    <citation type="journal article" date="2008" name="Nat. Cell Biol.">
        <title>Differential function of Tie2 at cell-cell contacts and cell-substratum contacts regulated by angiopoietin-1.</title>
        <authorList>
            <person name="Fukuhara S."/>
            <person name="Sako K."/>
            <person name="Minami T."/>
            <person name="Noda K."/>
            <person name="Kim H.Z."/>
            <person name="Kodama T."/>
            <person name="Shibuya M."/>
            <person name="Takakura N."/>
            <person name="Koh G.Y."/>
            <person name="Mochizuki N."/>
        </authorList>
    </citation>
    <scope>FUNCTION AS ANGPT1 RECEPTOR IN ACTIVATION OF AKT1 OR MAPK1/ERK2 AND MAPK3/ERK1; REGULATION OF ENDOTHELIAL CELL MIGRATION AND CELL SPREADING</scope>
    <scope>SUBCELLULAR LOCATION</scope>
</reference>
<reference key="16">
    <citation type="journal article" date="2008" name="Nat. Cell Biol.">
        <title>Angiopoietins assemble distinct Tie2 signalling complexes in endothelial cell-cell and cell-matrix contacts.</title>
        <authorList>
            <person name="Saharinen P."/>
            <person name="Eklund L."/>
            <person name="Miettinen J."/>
            <person name="Wirkkala R."/>
            <person name="Anisimov A."/>
            <person name="Winderlich M."/>
            <person name="Nottebaum A."/>
            <person name="Vestweber D."/>
            <person name="Deutsch U."/>
            <person name="Koh G.Y."/>
            <person name="Olsen B.R."/>
            <person name="Alitalo K."/>
        </authorList>
    </citation>
    <scope>FUNCTION AS ANGPT1 RECEPTOR IN ACTIVATION OF AKT1 OR MAPK1/ERK2 AND MAPK3/ERK1; REGULATION OF ENDOTHELIAL CELL MIGRATION AND REGULATION OF FOCAL ADHESION ASSEMBLY</scope>
    <scope>INTERACTION WITH TIE1</scope>
    <scope>AUTOPHOSPHORYLATION</scope>
    <scope>SUBCELLULAR LOCATION</scope>
</reference>
<reference key="17">
    <citation type="journal article" date="2009" name="Angiogenesis">
        <title>Tyrosine phosphatase beta regulates angiopoietin-Tie2 signaling in human endothelial cells.</title>
        <authorList>
            <person name="Yacyshyn O.K."/>
            <person name="Lai P.F.H."/>
            <person name="Forse K."/>
            <person name="Teichert-Kuliszewska K."/>
            <person name="Jurasz P."/>
            <person name="Stewart D.J."/>
        </authorList>
    </citation>
    <scope>PHOSPHORYLATION</scope>
    <scope>DEPHOSPHORYLATION BY PTPRB</scope>
</reference>
<reference key="18">
    <citation type="journal article" date="2009" name="Biochem. J.">
        <title>Angiopoietin-1-induced ubiquitylation of Tie2 by c-Cbl is required for internalization and degradation.</title>
        <authorList>
            <person name="Wehrle C."/>
            <person name="Van Slyke P."/>
            <person name="Dumont D.J."/>
        </authorList>
    </citation>
    <scope>INTERACTION WITH CBL</scope>
    <scope>SUBCELLULAR LOCATION</scope>
    <scope>UBIQUITINATION</scope>
</reference>
<reference key="19">
    <citation type="journal article" date="2009" name="J. Cell Biol.">
        <title>VE-PTP controls blood vessel development by balancing Tie-2 activity.</title>
        <authorList>
            <person name="Winderlich M."/>
            <person name="Keller L."/>
            <person name="Cagna G."/>
            <person name="Broermann A."/>
            <person name="Kamenyeva O."/>
            <person name="Kiefer F."/>
            <person name="Deutsch U."/>
            <person name="Nottebaum A.F."/>
            <person name="Vestweber D."/>
        </authorList>
    </citation>
    <scope>INTERACTION WITH PTPRB</scope>
</reference>
<reference key="20">
    <citation type="journal article" date="2009" name="J. Proteome Res.">
        <title>Glycoproteomics analysis of human liver tissue by combination of multiple enzyme digestion and hydrazide chemistry.</title>
        <authorList>
            <person name="Chen R."/>
            <person name="Jiang X."/>
            <person name="Sun D."/>
            <person name="Han G."/>
            <person name="Wang F."/>
            <person name="Ye M."/>
            <person name="Wang L."/>
            <person name="Zou H."/>
        </authorList>
    </citation>
    <scope>GLYCOSYLATION [LARGE SCALE ANALYSIS] AT ASN-596</scope>
    <source>
        <tissue>Liver</tissue>
    </source>
</reference>
<reference key="21">
    <citation type="journal article" date="2009" name="Mol. Cell. Biol.">
        <title>Angiopoietin 2 is a partial agonist/antagonist of Tie2 signaling in the endothelium.</title>
        <authorList>
            <person name="Yuan H.T."/>
            <person name="Khankin E.V."/>
            <person name="Karumanchi S.A."/>
            <person name="Parikh S.M."/>
        </authorList>
    </citation>
    <scope>FUNCTION AS RECEPTOR FOR ANGPT1 AND ANGPT2 IN ACTIVATION OF PHOSPHATIDYLINOSITOL 3-KINASE AND AKT1; STIMULATION OF ENDOTHELIAL CELL SURVIVAL AND MIGRATION</scope>
    <scope>CATALYTIC ACTIVITY</scope>
    <scope>AUTOPHOSPHORYLATION</scope>
</reference>
<reference key="22">
    <citation type="journal article" date="2008" name="Histol. Histopathol.">
        <title>Tie2: a journey from normal angiogenesis to cancer and beyond.</title>
        <authorList>
            <person name="Martin V."/>
            <person name="Liu D."/>
            <person name="Fueyo J."/>
            <person name="Gomez-Manzano C."/>
        </authorList>
    </citation>
    <scope>REVIEW ON FUNCTION; INTERACTION WITH EFFECTOR AND SCAFFOLDING PROTEINS</scope>
    <scope>ROLE IN DISEASE</scope>
</reference>
<reference key="23">
    <citation type="journal article" date="2009" name="Exp. Mol. Med.">
        <title>Tie2 is tied at the cell-cell contacts and to extracellular matrix by angiopoietin-1.</title>
        <authorList>
            <person name="Fukuhara S."/>
            <person name="Sako K."/>
            <person name="Noda K."/>
            <person name="Nagao K."/>
            <person name="Miura K."/>
            <person name="Mochizuki N."/>
        </authorList>
    </citation>
    <scope>REVIEW ON SUBCELLULAR LOCATION AND CONTEXT-SPECIFIC SIGNALING</scope>
</reference>
<reference key="24">
    <citation type="journal article" date="2009" name="Nat. Rev. Mol. Cell Biol.">
        <title>Control of vascular morphogenesis and homeostasis through the angiopoietin-Tie system.</title>
        <authorList>
            <person name="Augustin H.G."/>
            <person name="Koh G.Y."/>
            <person name="Thurston G."/>
            <person name="Alitalo K."/>
        </authorList>
    </citation>
    <scope>REVIEW</scope>
</reference>
<reference key="25">
    <citation type="journal article" date="2010" name="Histol. Histopathol.">
        <title>Angiopoietin-1/Tie2 receptor signaling in vascular quiescence and angiogenesis.</title>
        <authorList>
            <person name="Fukuhara S."/>
            <person name="Sako K."/>
            <person name="Noda K."/>
            <person name="Zhang J."/>
            <person name="Minami M."/>
            <person name="Mochizuki N."/>
        </authorList>
    </citation>
    <scope>REVIEW</scope>
</reference>
<reference key="26">
    <citation type="journal article" date="2010" name="Nat. Rev. Cancer">
        <title>Targeting the ANGPT-TIE2 pathway in malignancy.</title>
        <authorList>
            <person name="Huang H."/>
            <person name="Bhat A."/>
            <person name="Woodnutt G."/>
            <person name="Lappe R."/>
        </authorList>
    </citation>
    <scope>REVIEW ON SIGNALING</scope>
    <scope>ACTIVITY REGULATION</scope>
    <scope>ROLE IN DISEASE</scope>
</reference>
<reference key="27">
    <citation type="journal article" date="2020" name="Sci. Transl. Med.">
        <title>Characterization of ANGPT2 mutations associated with primary lymphedema.</title>
        <authorList>
            <person name="Leppaenen V.M."/>
            <person name="Brouillard P."/>
            <person name="Korhonen E.A."/>
            <person name="Sipilae T."/>
            <person name="Jha S.K."/>
            <person name="Revencu N."/>
            <person name="Labarque V."/>
            <person name="Fastre E."/>
            <person name="Schloegel M."/>
            <person name="Ravoet M."/>
            <person name="Singer A."/>
            <person name="Luzzatto C."/>
            <person name="Angelone D."/>
            <person name="Crichiutti G."/>
            <person name="D'Elia A."/>
            <person name="Kuurne J."/>
            <person name="Elamaa H."/>
            <person name="Koh G.Y."/>
            <person name="Saharinen P."/>
            <person name="Vikkula M."/>
            <person name="Alitalo K."/>
        </authorList>
    </citation>
    <scope>INTERACTION WITH ANGPT2</scope>
</reference>
<reference key="28">
    <citation type="journal article" date="2000" name="Structure">
        <title>Structure of the Tie2 RTK domain: self-inhibition by the nucleotide binding loop, activation loop, and C-terminal tail.</title>
        <authorList>
            <person name="Shewchuk L.M."/>
            <person name="Hassell A.M."/>
            <person name="Ellis B."/>
            <person name="Holmes W.D."/>
            <person name="Davis R."/>
            <person name="Horne E.L."/>
            <person name="Kadwell S.H."/>
            <person name="McKee D.D."/>
            <person name="Moore J.T."/>
        </authorList>
    </citation>
    <scope>X-RAY CRYSTALLOGRAPHY (2.2 ANGSTROMS) OF 808-1124</scope>
    <scope>ACTIVE SITE</scope>
    <scope>ACTIVITY REGULATION</scope>
    <scope>PREDICTION OF ATP-BINDING REGION</scope>
</reference>
<reference key="29">
    <citation type="journal article" date="2006" name="Nat. Struct. Mol. Biol.">
        <title>Crystal structures of the Tie2 receptor ectodomain and the angiopoietin-2-Tie2 complex.</title>
        <authorList>
            <person name="Barton W.A."/>
            <person name="Tzvetkova-Robev D."/>
            <person name="Miranda E.P."/>
            <person name="Kolev M.V."/>
            <person name="Rajashankar K.R."/>
            <person name="Himanen J.P."/>
            <person name="Nikolov D.B."/>
        </authorList>
    </citation>
    <scope>X-RAY CRYSTALLOGRAPHY (2.9 ANGSTROMS) OF 23-445 ALONE AND IN COMPLEX WITH ANGPT2</scope>
    <scope>GLYCOSYLATION AT ASN-140</scope>
    <scope>DISULFIDE BONDS</scope>
</reference>
<reference key="30">
    <citation type="journal article" date="2007" name="Bioorg. Med. Chem. Lett.">
        <title>Synthesis, structural analysis, and SAR studies of triazine derivatives as potent, selective Tie-2 inhibitors.</title>
        <authorList>
            <person name="Hodous B.L."/>
            <person name="Geuns-Meyer S.D."/>
            <person name="Hughes P.E."/>
            <person name="Albrecht B.K."/>
            <person name="Bellon S."/>
            <person name="Caenepeel S."/>
            <person name="Cee V.J."/>
            <person name="Chaffee S.C."/>
            <person name="Emery M."/>
            <person name="Fretland J."/>
            <person name="Gallant P."/>
            <person name="Gu Y."/>
            <person name="Johnson R.E."/>
            <person name="Kim J.L."/>
            <person name="Long A.M."/>
            <person name="Morrison M."/>
            <person name="Olivieri P.R."/>
            <person name="Patel V.F."/>
            <person name="Polverino A."/>
            <person name="Rose P."/>
            <person name="Wang L."/>
            <person name="Zhao H."/>
        </authorList>
    </citation>
    <scope>X-RAY CRYSTALLOGRAPHY (2.2 ANGSTROMS) OF 808-1124 IN COMPLEX WITH TRIAZINE DERIVATIVE</scope>
    <scope>ACTIVITY REGULATION</scope>
</reference>
<reference key="31">
    <citation type="journal article" date="2007" name="J. Med. Chem.">
        <title>Evolution of a highly selective and potent 2-(pyridin-2-yl)-1,3,5-triazine Tie-2 kinase inhibitor.</title>
        <authorList>
            <person name="Hodous B.L."/>
            <person name="Geuns-Meyer S.D."/>
            <person name="Hughes P.E."/>
            <person name="Albrecht B.K."/>
            <person name="Bellon S."/>
            <person name="Bready J."/>
            <person name="Caenepeel S."/>
            <person name="Cee V.J."/>
            <person name="Chaffee S.C."/>
            <person name="Coxon A."/>
            <person name="Emery M."/>
            <person name="Fretland J."/>
            <person name="Gallant P."/>
            <person name="Gu Y."/>
            <person name="Hoffman D."/>
            <person name="Johnson R.E."/>
            <person name="Kendall R."/>
            <person name="Kim J.L."/>
            <person name="Long A.M."/>
            <person name="Morrison M."/>
            <person name="Olivieri P.R."/>
            <person name="Patel V.F."/>
            <person name="Polverino A."/>
            <person name="Rose P."/>
            <person name="Tempest P."/>
            <person name="Wang L."/>
            <person name="Whittington D.A."/>
            <person name="Zhao H."/>
        </authorList>
    </citation>
    <scope>X-RAY CRYSTALLOGRAPHY (2.50 ANGSTROMS) OF 808-1124 IN COMPLEX WITH TRIAZINE DERIVATIVE</scope>
    <scope>ACTIVITY REGULATION</scope>
</reference>
<reference key="32">
    <citation type="journal article" date="2009" name="Bioorg. Med. Chem. Lett.">
        <title>Novel thienopyrimidine and thiazolopyrimidine kinase inhibitors with activity against Tie-2 in vitro and in vivo.</title>
        <authorList>
            <person name="Luke R.W."/>
            <person name="Ballard P."/>
            <person name="Buttar D."/>
            <person name="Campbell L."/>
            <person name="Curwen J."/>
            <person name="Emery S.C."/>
            <person name="Griffen A.M."/>
            <person name="Hassall L."/>
            <person name="Hayter B.R."/>
            <person name="Jones C.D."/>
            <person name="McCoull W."/>
            <person name="Mellor M."/>
            <person name="Swain M.L."/>
            <person name="Tucker J.A."/>
        </authorList>
    </citation>
    <scope>X-RAY CRYSTALLOGRAPHY (2.95 ANGSTROMS) OF 802-1124 IN COMPLEX WITH THIAZOLOPYRIMIDINE DERIVATIVE</scope>
    <scope>ACTIVITY REGULATION</scope>
</reference>
<reference key="33">
    <citation type="submission" date="2010-01" db="PDB data bank">
        <title>Crystal structure of cytoplasmic kinase domain of Tie2 complexed with inhibitor CEP11207.</title>
        <authorList>
            <person name="Fedorov A.A."/>
            <person name="Fedorov E.V."/>
            <person name="Pauletti D."/>
            <person name="Meyer S.L."/>
            <person name="Hudkins R.L."/>
            <person name="Almo S.C."/>
        </authorList>
    </citation>
    <scope>X-RAY CRYSTALLOGRAPHY (2.40 ANGSTROMS) OF 808-1124 IN COMPLEX WITH CEP11207</scope>
</reference>
<reference key="34">
    <citation type="journal article" date="1996" name="Cell">
        <title>Vascular dysmorphogenesis caused by an activating mutation in the receptor tyrosine kinase TIE2.</title>
        <authorList>
            <person name="Vikkula M."/>
            <person name="Boon L.M."/>
            <person name="Carraway K.L. III"/>
            <person name="Calvert J.T."/>
            <person name="Diamonti A.J."/>
            <person name="Goumnerov B."/>
            <person name="Pasyk K.A."/>
            <person name="Marchuk D.A."/>
            <person name="Warman M.L."/>
            <person name="Cantley L.C."/>
            <person name="Mulliken J.B."/>
            <person name="Olse B.R."/>
        </authorList>
    </citation>
    <scope>VARIANT VMCM TRP-849</scope>
</reference>
<reference key="35">
    <citation type="journal article" date="1999" name="Hum. Mol. Genet.">
        <title>Allelic and locus heterogeneity in inherited venous malformations.</title>
        <authorList>
            <person name="Calvert J.T."/>
            <person name="Riney T.J."/>
            <person name="Kontos C.D."/>
            <person name="Cha E.H."/>
            <person name="Prieto V.G."/>
            <person name="Shea C.R."/>
            <person name="Berg J.N."/>
            <person name="Nevin N.C."/>
            <person name="Simpson S.A."/>
            <person name="Pasyk K.A."/>
            <person name="Speer M.C."/>
            <person name="Peters K.G."/>
            <person name="Marchuk D.A."/>
        </authorList>
    </citation>
    <scope>VARIANTS VMCM TRP-849 AND SER-897</scope>
</reference>
<reference key="36">
    <citation type="journal article" date="2006" name="Science">
        <title>The consensus coding sequences of human breast and colorectal cancers.</title>
        <authorList>
            <person name="Sjoeblom T."/>
            <person name="Jones S."/>
            <person name="Wood L.D."/>
            <person name="Parsons D.W."/>
            <person name="Lin J."/>
            <person name="Barber T.D."/>
            <person name="Mandelker D."/>
            <person name="Leary R.J."/>
            <person name="Ptak J."/>
            <person name="Silliman N."/>
            <person name="Szabo S."/>
            <person name="Buckhaults P."/>
            <person name="Farrell C."/>
            <person name="Meeh P."/>
            <person name="Markowitz S.D."/>
            <person name="Willis J."/>
            <person name="Dawson D."/>
            <person name="Willson J.K.V."/>
            <person name="Gazdar A.F."/>
            <person name="Hartigan J."/>
            <person name="Wu L."/>
            <person name="Liu C."/>
            <person name="Parmigiani G."/>
            <person name="Park B.H."/>
            <person name="Bachman K.E."/>
            <person name="Papadopoulos N."/>
            <person name="Vogelstein B."/>
            <person name="Kinzler K.W."/>
            <person name="Velculescu V.E."/>
        </authorList>
    </citation>
    <scope>VARIANT [LARGE SCALE ANALYSIS] ASN-117</scope>
</reference>
<reference key="37">
    <citation type="journal article" date="2007" name="Nature">
        <title>Patterns of somatic mutation in human cancer genomes.</title>
        <authorList>
            <person name="Greenman C."/>
            <person name="Stephens P."/>
            <person name="Smith R."/>
            <person name="Dalgliesh G.L."/>
            <person name="Hunter C."/>
            <person name="Bignell G."/>
            <person name="Davies H."/>
            <person name="Teague J."/>
            <person name="Butler A."/>
            <person name="Stevens C."/>
            <person name="Edkins S."/>
            <person name="O'Meara S."/>
            <person name="Vastrik I."/>
            <person name="Schmidt E.E."/>
            <person name="Avis T."/>
            <person name="Barthorpe S."/>
            <person name="Bhamra G."/>
            <person name="Buck G."/>
            <person name="Choudhury B."/>
            <person name="Clements J."/>
            <person name="Cole J."/>
            <person name="Dicks E."/>
            <person name="Forbes S."/>
            <person name="Gray K."/>
            <person name="Halliday K."/>
            <person name="Harrison R."/>
            <person name="Hills K."/>
            <person name="Hinton J."/>
            <person name="Jenkinson A."/>
            <person name="Jones D."/>
            <person name="Menzies A."/>
            <person name="Mironenko T."/>
            <person name="Perry J."/>
            <person name="Raine K."/>
            <person name="Richardson D."/>
            <person name="Shepherd R."/>
            <person name="Small A."/>
            <person name="Tofts C."/>
            <person name="Varian J."/>
            <person name="Webb T."/>
            <person name="West S."/>
            <person name="Widaa S."/>
            <person name="Yates A."/>
            <person name="Cahill D.P."/>
            <person name="Louis D.N."/>
            <person name="Goldstraw P."/>
            <person name="Nicholson A.G."/>
            <person name="Brasseur F."/>
            <person name="Looijenga L."/>
            <person name="Weber B.L."/>
            <person name="Chiew Y.-E."/>
            <person name="DeFazio A."/>
            <person name="Greaves M.F."/>
            <person name="Green A.R."/>
            <person name="Campbell P."/>
            <person name="Birney E."/>
            <person name="Easton D.F."/>
            <person name="Chenevix-Trench G."/>
            <person name="Tan M.-H."/>
            <person name="Khoo S.K."/>
            <person name="Teh B.T."/>
            <person name="Yuen S.T."/>
            <person name="Leung S.Y."/>
            <person name="Wooster R."/>
            <person name="Futreal P.A."/>
            <person name="Stratton M.R."/>
        </authorList>
    </citation>
    <scope>VARIANTS [LARGE SCALE ANALYSIS] ASN-117; THR-148; VAL-226; ILE-486; LEU-600; PHE-634; ILE-676; THR-724; ALA-883 AND VAL-1124</scope>
</reference>
<reference key="38">
    <citation type="journal article" date="2009" name="Nat. Genet.">
        <title>Somatic mutations in angiopoietin receptor gene TEK cause solitary and multiple sporadic venous malformations.</title>
        <authorList>
            <person name="Limaye N."/>
            <person name="Wouters V."/>
            <person name="Uebelhoer M."/>
            <person name="Tuominen M."/>
            <person name="Wirkkala R."/>
            <person name="Mulliken J.B."/>
            <person name="Eklund L."/>
            <person name="Boon L.M."/>
            <person name="Vikkula M."/>
        </authorList>
    </citation>
    <scope>INVOLVEMENT IN VMCM</scope>
    <scope>INVOLVEMENT IN DISEASE</scope>
    <scope>SUBCELLULAR LOCATION</scope>
    <scope>CHARACTERIZATION OF VARIANTS VMCM TRP-849</scope>
    <scope>VARIANTS HIS-897; PHE-897; SER-897; PHE-914; CYS-915; LEU-915 AND ILE-917</scope>
    <scope>CHARACTERIZATION OF VARIANTS HIS-897; PHE-897; SER-897; PHE-914; CYS-915; LEU-915 AND ILE-917</scope>
    <scope>PHOSPHORYLATION AT TYR-1102</scope>
</reference>
<reference key="39">
    <citation type="journal article" date="2010" name="Eur. J. Hum. Genet.">
        <title>Hereditary cutaneomucosal venous malformations are caused by TIE2 mutations with widely variable hyper-phosphorylating effects.</title>
        <authorList>
            <person name="Wouters V."/>
            <person name="Limaye N."/>
            <person name="Uebelhoer M."/>
            <person name="Irrthum A."/>
            <person name="Boon L.M."/>
            <person name="Mulliken J.B."/>
            <person name="Enjolras O."/>
            <person name="Baselga E."/>
            <person name="Berg J."/>
            <person name="Dompmartin A."/>
            <person name="Ivarsson S.A."/>
            <person name="Kangesu L."/>
            <person name="Lacassie Y."/>
            <person name="Murphy J."/>
            <person name="Teebi A.S."/>
            <person name="Penington A."/>
            <person name="Rieu P."/>
            <person name="Vikkula M."/>
        </authorList>
    </citation>
    <scope>VARIANTS VMCM TRP-849; CYS-897; HIS-915; CYS-918; LEU-919; SER-925 AND ASN-1100</scope>
    <scope>CHARACTERIZATION OF VARIANTS VMCM TRP-849; SER-897; HIS-915; CYS-918; LEU-919; SER-925 AND ASN-1100</scope>
</reference>
<reference key="40">
    <citation type="journal article" date="2016" name="J. Clin. Invest.">
        <title>Angiopoietin receptor TEK mutations underlie primary congenital glaucoma with variable expressivity.</title>
        <authorList>
            <person name="Souma T."/>
            <person name="Tompson S.W."/>
            <person name="Thomson B.R."/>
            <person name="Siggs O.M."/>
            <person name="Kizhatil K."/>
            <person name="Yamaguchi S."/>
            <person name="Feng L."/>
            <person name="Limviphuvadh V."/>
            <person name="Whisenhunt K.N."/>
            <person name="Maurer-Stroh S."/>
            <person name="Yanovitch T.L."/>
            <person name="Kalaydjieva L."/>
            <person name="Azmanov D.N."/>
            <person name="Finzi S."/>
            <person name="Mauri L."/>
            <person name="Javadiyan S."/>
            <person name="Souzeau E."/>
            <person name="Zhou T."/>
            <person name="Hewitt A.W."/>
            <person name="Kloss B."/>
            <person name="Burdon K.P."/>
            <person name="Mackey D.A."/>
            <person name="Allen K.F."/>
            <person name="Ruddle J.B."/>
            <person name="Lim S.H."/>
            <person name="Rozen S."/>
            <person name="Tran-Viet K.N."/>
            <person name="Liu X."/>
            <person name="John S."/>
            <person name="Wiggs J.L."/>
            <person name="Pasutto F."/>
            <person name="Craig J.E."/>
            <person name="Jin J."/>
            <person name="Quaggin S.E."/>
            <person name="Young T.L."/>
        </authorList>
    </citation>
    <scope>INVOLVEMENT IN GLC3E</scope>
    <scope>VARIANTS GLC3E 19-THR--ARG-210 DEL; TYR-233; ASN-294 AND CYS-611</scope>
    <scope>CHARACTERIZATION OF VARIANTS GLC3E 19-THR--ARG-210 DEL; TYR-233; ASN-294 AND CYS-611</scope>
    <scope>SUBCELLULAR LOCATION</scope>
    <scope>MUTAGENESIS OF CYS-224</scope>
</reference>
<name>TIE2_HUMAN</name>
<feature type="signal peptide" evidence="15">
    <location>
        <begin position="1"/>
        <end position="22"/>
    </location>
</feature>
<feature type="chain" id="PRO_0000024474" description="Angiopoietin-1 receptor">
    <location>
        <begin position="23"/>
        <end position="1124"/>
    </location>
</feature>
<feature type="topological domain" description="Extracellular" evidence="1">
    <location>
        <begin position="23"/>
        <end position="748"/>
    </location>
</feature>
<feature type="transmembrane region" description="Helical" evidence="1">
    <location>
        <begin position="749"/>
        <end position="769"/>
    </location>
</feature>
<feature type="topological domain" description="Cytoplasmic" evidence="1">
    <location>
        <begin position="770"/>
        <end position="1124"/>
    </location>
</feature>
<feature type="domain" description="Ig-like C2-type 1">
    <location>
        <begin position="44"/>
        <end position="123"/>
    </location>
</feature>
<feature type="domain" description="EGF-like 1" evidence="2">
    <location>
        <begin position="210"/>
        <end position="252"/>
    </location>
</feature>
<feature type="domain" description="EGF-like 2" evidence="2">
    <location>
        <begin position="254"/>
        <end position="299"/>
    </location>
</feature>
<feature type="domain" description="EGF-like 3" evidence="2">
    <location>
        <begin position="301"/>
        <end position="341"/>
    </location>
</feature>
<feature type="domain" description="Ig-like C2-type 2">
    <location>
        <begin position="350"/>
        <end position="440"/>
    </location>
</feature>
<feature type="domain" description="Fibronectin type-III 1" evidence="4">
    <location>
        <begin position="447"/>
        <end position="541"/>
    </location>
</feature>
<feature type="domain" description="Fibronectin type-III 2" evidence="4">
    <location>
        <begin position="545"/>
        <end position="636"/>
    </location>
</feature>
<feature type="domain" description="Fibronectin type-III 3" evidence="4">
    <location>
        <begin position="641"/>
        <end position="735"/>
    </location>
</feature>
<feature type="domain" description="Protein kinase" evidence="3">
    <location>
        <begin position="824"/>
        <end position="1096"/>
    </location>
</feature>
<feature type="active site" description="Proton acceptor" evidence="44">
    <location>
        <position position="964"/>
    </location>
</feature>
<feature type="binding site" evidence="43">
    <location>
        <begin position="830"/>
        <end position="838"/>
    </location>
    <ligand>
        <name>ATP</name>
        <dbReference type="ChEBI" id="CHEBI:30616"/>
    </ligand>
</feature>
<feature type="binding site" evidence="43">
    <location>
        <position position="855"/>
    </location>
    <ligand>
        <name>ATP</name>
        <dbReference type="ChEBI" id="CHEBI:30616"/>
    </ligand>
</feature>
<feature type="modified residue" description="Phosphotyrosine; by autocatalysis" evidence="8">
    <location>
        <position position="860"/>
    </location>
</feature>
<feature type="modified residue" description="Phosphotyrosine; by autocatalysis" evidence="8">
    <location>
        <position position="992"/>
    </location>
</feature>
<feature type="modified residue" description="Phosphotyrosine; by autocatalysis" evidence="12 34">
    <location>
        <position position="1102"/>
    </location>
</feature>
<feature type="modified residue" description="Phosphotyrosine; by autocatalysis" evidence="8">
    <location>
        <position position="1108"/>
    </location>
</feature>
<feature type="glycosylation site" description="N-linked (GlcNAc...) asparagine" evidence="18">
    <location>
        <position position="140"/>
    </location>
</feature>
<feature type="glycosylation site" description="N-linked (GlcNAc...) asparagine" evidence="1">
    <location>
        <position position="158"/>
    </location>
</feature>
<feature type="glycosylation site" description="N-linked (GlcNAc...) asparagine" evidence="1">
    <location>
        <position position="399"/>
    </location>
</feature>
<feature type="glycosylation site" description="N-linked (GlcNAc...) asparagine" evidence="1">
    <location>
        <position position="438"/>
    </location>
</feature>
<feature type="glycosylation site" description="N-linked (GlcNAc...) asparagine" evidence="1">
    <location>
        <position position="464"/>
    </location>
</feature>
<feature type="glycosylation site" description="N-linked (GlcNAc...) asparagine" evidence="1">
    <location>
        <position position="560"/>
    </location>
</feature>
<feature type="glycosylation site" description="N-linked (GlcNAc...) asparagine" evidence="27">
    <location>
        <position position="596"/>
    </location>
</feature>
<feature type="glycosylation site" description="N-linked (GlcNAc...) asparagine" evidence="1">
    <location>
        <position position="649"/>
    </location>
</feature>
<feature type="glycosylation site" description="N-linked (GlcNAc...) asparagine" evidence="1">
    <location>
        <position position="691"/>
    </location>
</feature>
<feature type="disulfide bond" evidence="18">
    <location>
        <begin position="44"/>
        <end position="102"/>
    </location>
</feature>
<feature type="disulfide bond" evidence="18">
    <location>
        <begin position="211"/>
        <end position="220"/>
    </location>
</feature>
<feature type="disulfide bond" evidence="18">
    <location>
        <begin position="224"/>
        <end position="233"/>
    </location>
</feature>
<feature type="disulfide bond" evidence="18">
    <location>
        <begin position="227"/>
        <end position="240"/>
    </location>
</feature>
<feature type="disulfide bond" evidence="18">
    <location>
        <begin position="242"/>
        <end position="251"/>
    </location>
</feature>
<feature type="disulfide bond" evidence="18">
    <location>
        <begin position="255"/>
        <end position="264"/>
    </location>
</feature>
<feature type="disulfide bond" evidence="18">
    <location>
        <begin position="268"/>
        <end position="274"/>
    </location>
</feature>
<feature type="disulfide bond" evidence="18">
    <location>
        <begin position="280"/>
        <end position="287"/>
    </location>
</feature>
<feature type="disulfide bond" evidence="18">
    <location>
        <begin position="289"/>
        <end position="298"/>
    </location>
</feature>
<feature type="disulfide bond" evidence="18">
    <location>
        <begin position="302"/>
        <end position="311"/>
    </location>
</feature>
<feature type="disulfide bond" evidence="18">
    <location>
        <begin position="315"/>
        <end position="323"/>
    </location>
</feature>
<feature type="disulfide bond" evidence="18">
    <location>
        <begin position="317"/>
        <end position="329"/>
    </location>
</feature>
<feature type="disulfide bond" evidence="18">
    <location>
        <begin position="331"/>
        <end position="340"/>
    </location>
</feature>
<feature type="disulfide bond" evidence="18">
    <location>
        <begin position="370"/>
        <end position="424"/>
    </location>
</feature>
<feature type="splice variant" id="VSP_042137" description="In isoform 3." evidence="41">
    <location>
        <begin position="18"/>
        <end position="121"/>
    </location>
</feature>
<feature type="splice variant" id="VSP_042138" description="In isoform 2 and isoform 3." evidence="41">
    <location>
        <begin position="300"/>
        <end position="342"/>
    </location>
</feature>
<feature type="splice variant" id="VSP_042139" description="In isoform 3." evidence="41">
    <location>
        <position position="788"/>
    </location>
</feature>
<feature type="sequence variant" id="VAR_078045" description="In GLC3E; formation of protein aggregates." evidence="34">
    <location>
        <begin position="19"/>
        <end position="210"/>
    </location>
</feature>
<feature type="sequence variant" id="VAR_035714" description="In breast cancer samples; infiltrating ductal carcinoma; somatic mutation." evidence="19 21">
    <original>K</original>
    <variation>N</variation>
    <location>
        <position position="117"/>
    </location>
</feature>
<feature type="sequence variant" id="VAR_041855" description="In dbSNP:rs35969327." evidence="21">
    <original>I</original>
    <variation>T</variation>
    <location>
        <position position="148"/>
    </location>
</feature>
<feature type="sequence variant" id="VAR_041856" description="In dbSNP:rs35814893." evidence="21">
    <original>A</original>
    <variation>V</variation>
    <location>
        <position position="226"/>
    </location>
</feature>
<feature type="sequence variant" id="VAR_078046" description="In GLC3E; enhanced proteasomal degradation." evidence="34">
    <original>C</original>
    <variation>Y</variation>
    <location>
        <position position="233"/>
    </location>
</feature>
<feature type="sequence variant" id="VAR_078047" description="In GLC3E; uncertain significance; 10-fold decrease of Tyr-1102 phosphorylation; no effect on membrane location; dbSNP:rs146169480." evidence="34">
    <original>K</original>
    <variation>N</variation>
    <location>
        <position position="294"/>
    </location>
</feature>
<feature type="sequence variant" id="VAR_048002" description="In dbSNP:rs682632." evidence="13 16 36 40">
    <original>Q</original>
    <variation>P</variation>
    <location>
        <position position="346"/>
    </location>
</feature>
<feature type="sequence variant" id="VAR_048003" description="In dbSNP:rs34032300.">
    <original>T</original>
    <variation>I</variation>
    <location>
        <position position="391"/>
    </location>
</feature>
<feature type="sequence variant" id="VAR_024578" description="In dbSNP:rs1334811." evidence="21">
    <original>V</original>
    <variation>I</variation>
    <location>
        <position position="486"/>
    </location>
</feature>
<feature type="sequence variant" id="VAR_041857" description="In dbSNP:rs35030851." evidence="21">
    <original>V</original>
    <variation>L</variation>
    <location>
        <position position="600"/>
    </location>
</feature>
<feature type="sequence variant" id="VAR_078048" description="In GLC3E; reduced response to ligand; loss of ligand-induced phosphorylation; no effect on basal membrane location; dbSNP:rs1306527531." evidence="34">
    <original>Y</original>
    <variation>C</variation>
    <location>
        <position position="611"/>
    </location>
</feature>
<feature type="sequence variant" id="VAR_041858" description="In dbSNP:rs35378598." evidence="21">
    <original>L</original>
    <variation>F</variation>
    <location>
        <position position="634"/>
    </location>
</feature>
<feature type="sequence variant" id="VAR_041859" description="In dbSNP:rs56367117." evidence="21">
    <original>V</original>
    <variation>I</variation>
    <location>
        <position position="676"/>
    </location>
</feature>
<feature type="sequence variant" id="VAR_041860" description="In dbSNP:rs4631561." evidence="21">
    <original>A</original>
    <variation>T</variation>
    <location>
        <position position="724"/>
    </location>
</feature>
<feature type="sequence variant" id="VAR_006352" description="In VMCM; increased ligand-independent autophosphorylation and kinase activation; no effect on location at membrane; dbSNP:rs80338908." evidence="6 26 32 37">
    <original>R</original>
    <variation>W</variation>
    <location>
        <position position="849"/>
    </location>
</feature>
<feature type="sequence variant" id="VAR_041861" description="In an ovarian serous carcinoma sample; somatic mutation; dbSNP:rs1490428165." evidence="21">
    <original>P</original>
    <variation>A</variation>
    <location>
        <position position="883"/>
    </location>
</feature>
<feature type="sequence variant" id="VAR_066606" description="In VMCM; increased ligand-independent autophosphorylation and kinase activation; dbSNP:rs80338909." evidence="32">
    <original>Y</original>
    <variation>C</variation>
    <location>
        <position position="897"/>
    </location>
</feature>
<feature type="sequence variant" id="VAR_078049" description="Found in a patient with multiple sporadic venous malformations; increased ligand-independent autophosphorylation." evidence="26">
    <original>Y</original>
    <variation>F</variation>
    <location>
        <position position="897"/>
    </location>
</feature>
<feature type="sequence variant" id="VAR_078050" description="Found in a patient with solitary sporadic venous malformations; increased ligand-independent autophosphorylation; dbSNP:rs2131227936." evidence="26">
    <original>Y</original>
    <variation>H</variation>
    <location>
        <position position="897"/>
    </location>
</feature>
<feature type="sequence variant" id="VAR_008716" description="In VMCM; also found in a patient with solitary sporadic venous malformations; increased ligand-independent autophosphorylation and kinase activation; dbSNP:rs80338909." evidence="6 26 32">
    <original>Y</original>
    <variation>S</variation>
    <location>
        <position position="897"/>
    </location>
</feature>
<feature type="sequence variant" id="VAR_078051" description="Found in patients with solitary and multiple sporadic venous malformations; increased ligand-independent autophosphorylation; novel location at endoplasmic reticulum and Golgi apparatus; partially retained at endoplasmic reticulum and Golgi apparatus; dbSNP:rs1825682849." evidence="26">
    <original>L</original>
    <variation>F</variation>
    <location>
        <position position="914"/>
    </location>
</feature>
<feature type="sequence variant" id="VAR_078052" description="Found in a patient with solitary sporadic venous malformations; increased ligand-independent autophosphorylation; dbSNP:rs1825682922." evidence="26">
    <original>R</original>
    <variation>C</variation>
    <location>
        <position position="915"/>
    </location>
</feature>
<feature type="sequence variant" id="VAR_066607" description="In VMCM; strongly increased ligand-independent autophosphorylation and kinase activation; dbSNP:rs387906745." evidence="32">
    <original>R</original>
    <variation>H</variation>
    <location>
        <position position="915"/>
    </location>
</feature>
<feature type="sequence variant" id="VAR_078053" description="Found in a patient with multiple sporadic venous malformations; increased ligand-independent autophosphorylation." evidence="26">
    <original>R</original>
    <variation>L</variation>
    <location>
        <position position="915"/>
    </location>
</feature>
<feature type="sequence variant" id="VAR_078054" description="Found in a patient with solitary sporadic venous malformations; increased ligand-independent autophosphorylation." evidence="26">
    <original>S</original>
    <variation>I</variation>
    <location>
        <position position="917"/>
    </location>
</feature>
<feature type="sequence variant" id="VAR_066608" description="In VMCM; strongly increased ligand-independent autophosphorylation and kinase activation; dbSNP:rs1825683100." evidence="32">
    <original>R</original>
    <variation>C</variation>
    <location>
        <position position="918"/>
    </location>
</feature>
<feature type="sequence variant" id="VAR_066609" description="In VMCM; increased ligand-independent autophosphorylation and kinase activation." evidence="32">
    <original>V</original>
    <variation>L</variation>
    <location>
        <position position="919"/>
    </location>
</feature>
<feature type="sequence variant" id="VAR_066610" description="In VMCM; increased ligand-independent autophosphorylation and kinase activation." evidence="32">
    <original>A</original>
    <variation>S</variation>
    <location>
        <position position="925"/>
    </location>
</feature>
<feature type="sequence variant" id="VAR_066611" description="In VMCM; strongly increased ligand-independent autophosphorylation and kinase activation." evidence="32">
    <original>K</original>
    <variation>N</variation>
    <location>
        <position position="1100"/>
    </location>
</feature>
<feature type="sequence variant" id="VAR_041862" description="In a renal clear cell carcinoma sample; somatic mutation; dbSNP:rs775859042." evidence="21">
    <original>A</original>
    <variation>V</variation>
    <location>
        <position position="1124"/>
    </location>
</feature>
<feature type="mutagenesis site" description="Reduces protein abundance." evidence="34">
    <original>C</original>
    <variation>S</variation>
    <location>
        <position position="224"/>
    </location>
</feature>
<feature type="mutagenesis site" description="Loss of kinase activity." evidence="10 17">
    <original>K</original>
    <variation>R</variation>
    <location>
        <position position="855"/>
    </location>
</feature>
<feature type="mutagenesis site" description="Abolishes interaction with SHC1." evidence="12">
    <original>Y</original>
    <variation>F</variation>
    <location>
        <position position="1102"/>
    </location>
</feature>
<feature type="sequence conflict" description="In Ref. 2; BAG58094." evidence="43" ref="2">
    <original>F</original>
    <variation>L</variation>
    <location>
        <position position="536"/>
    </location>
</feature>
<feature type="sequence conflict" description="In Ref. 1; AAA61139." evidence="43" ref="1">
    <original>T</original>
    <variation>I</variation>
    <location>
        <position position="695"/>
    </location>
</feature>
<feature type="sequence conflict" description="In Ref. 5; AAH35514." evidence="43" ref="5">
    <original>QQ</original>
    <variation>HH</variation>
    <location>
        <begin position="939"/>
        <end position="940"/>
    </location>
</feature>
<feature type="strand" evidence="48">
    <location>
        <begin position="26"/>
        <end position="29"/>
    </location>
</feature>
<feature type="strand" evidence="48">
    <location>
        <begin position="33"/>
        <end position="35"/>
    </location>
</feature>
<feature type="strand" evidence="48">
    <location>
        <begin position="40"/>
        <end position="46"/>
    </location>
</feature>
<feature type="strand" evidence="48">
    <location>
        <begin position="56"/>
        <end position="59"/>
    </location>
</feature>
<feature type="turn" evidence="48">
    <location>
        <begin position="61"/>
        <end position="63"/>
    </location>
</feature>
<feature type="strand" evidence="48">
    <location>
        <begin position="64"/>
        <end position="66"/>
    </location>
</feature>
<feature type="strand" evidence="48">
    <location>
        <begin position="74"/>
        <end position="76"/>
    </location>
</feature>
<feature type="strand" evidence="48">
    <location>
        <begin position="80"/>
        <end position="88"/>
    </location>
</feature>
<feature type="strand" evidence="48">
    <location>
        <begin position="98"/>
        <end position="106"/>
    </location>
</feature>
<feature type="strand" evidence="48">
    <location>
        <begin position="109"/>
        <end position="119"/>
    </location>
</feature>
<feature type="strand" evidence="48">
    <location>
        <begin position="123"/>
        <end position="125"/>
    </location>
</feature>
<feature type="strand" evidence="48">
    <location>
        <begin position="127"/>
        <end position="133"/>
    </location>
</feature>
<feature type="strand" evidence="48">
    <location>
        <begin position="139"/>
        <end position="145"/>
    </location>
</feature>
<feature type="strand" evidence="48">
    <location>
        <begin position="153"/>
        <end position="157"/>
    </location>
</feature>
<feature type="strand" evidence="48">
    <location>
        <begin position="160"/>
        <end position="165"/>
    </location>
</feature>
<feature type="helix" evidence="48">
    <location>
        <begin position="167"/>
        <end position="169"/>
    </location>
</feature>
<feature type="strand" evidence="48">
    <location>
        <begin position="172"/>
        <end position="178"/>
    </location>
</feature>
<feature type="helix" evidence="48">
    <location>
        <begin position="183"/>
        <end position="185"/>
    </location>
</feature>
<feature type="strand" evidence="48">
    <location>
        <begin position="187"/>
        <end position="193"/>
    </location>
</feature>
<feature type="helix" evidence="48">
    <location>
        <begin position="198"/>
        <end position="200"/>
    </location>
</feature>
<feature type="strand" evidence="48">
    <location>
        <begin position="202"/>
        <end position="208"/>
    </location>
</feature>
<feature type="strand" evidence="48">
    <location>
        <begin position="215"/>
        <end position="217"/>
    </location>
</feature>
<feature type="turn" evidence="48">
    <location>
        <begin position="235"/>
        <end position="237"/>
    </location>
</feature>
<feature type="strand" evidence="48">
    <location>
        <begin position="246"/>
        <end position="248"/>
    </location>
</feature>
<feature type="strand" evidence="48">
    <location>
        <begin position="259"/>
        <end position="261"/>
    </location>
</feature>
<feature type="turn" evidence="48">
    <location>
        <begin position="271"/>
        <end position="276"/>
    </location>
</feature>
<feature type="strand" evidence="48">
    <location>
        <begin position="279"/>
        <end position="281"/>
    </location>
</feature>
<feature type="turn" evidence="48">
    <location>
        <begin position="282"/>
        <end position="285"/>
    </location>
</feature>
<feature type="strand" evidence="48">
    <location>
        <begin position="286"/>
        <end position="288"/>
    </location>
</feature>
<feature type="helix" evidence="48">
    <location>
        <begin position="296"/>
        <end position="298"/>
    </location>
</feature>
<feature type="strand" evidence="48">
    <location>
        <begin position="322"/>
        <end position="324"/>
    </location>
</feature>
<feature type="turn" evidence="48">
    <location>
        <begin position="325"/>
        <end position="327"/>
    </location>
</feature>
<feature type="strand" evidence="48">
    <location>
        <begin position="328"/>
        <end position="330"/>
    </location>
</feature>
<feature type="strand" evidence="48">
    <location>
        <begin position="361"/>
        <end position="366"/>
    </location>
</feature>
<feature type="strand" evidence="48">
    <location>
        <begin position="369"/>
        <end position="373"/>
    </location>
</feature>
<feature type="helix" evidence="48">
    <location>
        <begin position="380"/>
        <end position="382"/>
    </location>
</feature>
<feature type="strand" evidence="48">
    <location>
        <begin position="383"/>
        <end position="386"/>
    </location>
</feature>
<feature type="strand" evidence="48">
    <location>
        <begin position="396"/>
        <end position="400"/>
    </location>
</feature>
<feature type="strand" evidence="48">
    <location>
        <begin position="405"/>
        <end position="408"/>
    </location>
</feature>
<feature type="strand" evidence="48">
    <location>
        <begin position="411"/>
        <end position="414"/>
    </location>
</feature>
<feature type="helix" evidence="48">
    <location>
        <begin position="416"/>
        <end position="418"/>
    </location>
</feature>
<feature type="strand" evidence="48">
    <location>
        <begin position="420"/>
        <end position="428"/>
    </location>
</feature>
<feature type="strand" evidence="48">
    <location>
        <begin position="431"/>
        <end position="439"/>
    </location>
</feature>
<feature type="strand" evidence="52">
    <location>
        <begin position="446"/>
        <end position="449"/>
    </location>
</feature>
<feature type="strand" evidence="52">
    <location>
        <begin position="452"/>
        <end position="456"/>
    </location>
</feature>
<feature type="strand" evidence="52">
    <location>
        <begin position="461"/>
        <end position="464"/>
    </location>
</feature>
<feature type="strand" evidence="52">
    <location>
        <begin position="469"/>
        <end position="472"/>
    </location>
</feature>
<feature type="strand" evidence="52">
    <location>
        <begin position="476"/>
        <end position="485"/>
    </location>
</feature>
<feature type="strand" evidence="52">
    <location>
        <begin position="493"/>
        <end position="504"/>
    </location>
</feature>
<feature type="strand" evidence="52">
    <location>
        <begin position="512"/>
        <end position="521"/>
    </location>
</feature>
<feature type="strand" evidence="52">
    <location>
        <begin position="534"/>
        <end position="537"/>
    </location>
</feature>
<feature type="strand" evidence="54">
    <location>
        <begin position="550"/>
        <end position="555"/>
    </location>
</feature>
<feature type="strand" evidence="54">
    <location>
        <begin position="558"/>
        <end position="562"/>
    </location>
</feature>
<feature type="strand" evidence="51">
    <location>
        <begin position="569"/>
        <end position="572"/>
    </location>
</feature>
<feature type="strand" evidence="54">
    <location>
        <begin position="575"/>
        <end position="585"/>
    </location>
</feature>
<feature type="strand" evidence="54">
    <location>
        <begin position="588"/>
        <end position="594"/>
    </location>
</feature>
<feature type="strand" evidence="54">
    <location>
        <begin position="598"/>
        <end position="602"/>
    </location>
</feature>
<feature type="strand" evidence="54">
    <location>
        <begin position="610"/>
        <end position="621"/>
    </location>
</feature>
<feature type="strand" evidence="54">
    <location>
        <begin position="629"/>
        <end position="632"/>
    </location>
</feature>
<feature type="strand" evidence="54">
    <location>
        <begin position="643"/>
        <end position="648"/>
    </location>
</feature>
<feature type="strand" evidence="54">
    <location>
        <begin position="655"/>
        <end position="660"/>
    </location>
</feature>
<feature type="strand" evidence="54">
    <location>
        <begin position="663"/>
        <end position="665"/>
    </location>
</feature>
<feature type="strand" evidence="54">
    <location>
        <begin position="669"/>
        <end position="677"/>
    </location>
</feature>
<feature type="strand" evidence="54">
    <location>
        <begin position="683"/>
        <end position="689"/>
    </location>
</feature>
<feature type="strand" evidence="54">
    <location>
        <begin position="696"/>
        <end position="699"/>
    </location>
</feature>
<feature type="strand" evidence="54">
    <location>
        <begin position="707"/>
        <end position="715"/>
    </location>
</feature>
<feature type="strand" evidence="54">
    <location>
        <begin position="727"/>
        <end position="730"/>
    </location>
</feature>
<feature type="strand" evidence="47">
    <location>
        <begin position="816"/>
        <end position="818"/>
    </location>
</feature>
<feature type="helix" evidence="53">
    <location>
        <begin position="821"/>
        <end position="823"/>
    </location>
</feature>
<feature type="strand" evidence="53">
    <location>
        <begin position="824"/>
        <end position="833"/>
    </location>
</feature>
<feature type="strand" evidence="53">
    <location>
        <begin position="836"/>
        <end position="845"/>
    </location>
</feature>
<feature type="strand" evidence="53">
    <location>
        <begin position="848"/>
        <end position="857"/>
    </location>
</feature>
<feature type="helix" evidence="50">
    <location>
        <begin position="864"/>
        <end position="866"/>
    </location>
</feature>
<feature type="helix" evidence="53">
    <location>
        <begin position="872"/>
        <end position="879"/>
    </location>
</feature>
<feature type="strand" evidence="53">
    <location>
        <begin position="888"/>
        <end position="894"/>
    </location>
</feature>
<feature type="strand" evidence="53">
    <location>
        <begin position="897"/>
        <end position="903"/>
    </location>
</feature>
<feature type="helix" evidence="53">
    <location>
        <begin position="910"/>
        <end position="916"/>
    </location>
</feature>
<feature type="helix" evidence="53">
    <location>
        <begin position="919"/>
        <end position="922"/>
    </location>
</feature>
<feature type="helix" evidence="53">
    <location>
        <begin position="924"/>
        <end position="929"/>
    </location>
</feature>
<feature type="strand" evidence="49">
    <location>
        <begin position="932"/>
        <end position="936"/>
    </location>
</feature>
<feature type="helix" evidence="53">
    <location>
        <begin position="938"/>
        <end position="957"/>
    </location>
</feature>
<feature type="helix" evidence="53">
    <location>
        <begin position="967"/>
        <end position="969"/>
    </location>
</feature>
<feature type="strand" evidence="53">
    <location>
        <begin position="970"/>
        <end position="972"/>
    </location>
</feature>
<feature type="helix" evidence="53">
    <location>
        <begin position="974"/>
        <end position="976"/>
    </location>
</feature>
<feature type="strand" evidence="53">
    <location>
        <begin position="978"/>
        <end position="980"/>
    </location>
</feature>
<feature type="helix" evidence="53">
    <location>
        <begin position="985"/>
        <end position="987"/>
    </location>
</feature>
<feature type="helix" evidence="53">
    <location>
        <begin position="1000"/>
        <end position="1004"/>
    </location>
</feature>
<feature type="helix" evidence="53">
    <location>
        <begin position="1007"/>
        <end position="1012"/>
    </location>
</feature>
<feature type="helix" evidence="53">
    <location>
        <begin position="1017"/>
        <end position="1032"/>
    </location>
</feature>
<feature type="turn" evidence="53">
    <location>
        <begin position="1038"/>
        <end position="1041"/>
    </location>
</feature>
<feature type="helix" evidence="53">
    <location>
        <begin position="1044"/>
        <end position="1050"/>
    </location>
</feature>
<feature type="helix" evidence="53">
    <location>
        <begin position="1051"/>
        <end position="1053"/>
    </location>
</feature>
<feature type="helix" evidence="53">
    <location>
        <begin position="1065"/>
        <end position="1074"/>
    </location>
</feature>
<feature type="helix" evidence="53">
    <location>
        <begin position="1079"/>
        <end position="1081"/>
    </location>
</feature>
<feature type="helix" evidence="53">
    <location>
        <begin position="1085"/>
        <end position="1097"/>
    </location>
</feature>
<feature type="strand" evidence="53">
    <location>
        <begin position="1098"/>
        <end position="1100"/>
    </location>
</feature>
<feature type="helix" evidence="53">
    <location>
        <begin position="1118"/>
        <end position="1120"/>
    </location>
</feature>
<keyword id="KW-0002">3D-structure</keyword>
<keyword id="KW-0025">Alternative splicing</keyword>
<keyword id="KW-0037">Angiogenesis</keyword>
<keyword id="KW-0067">ATP-binding</keyword>
<keyword id="KW-0965">Cell junction</keyword>
<keyword id="KW-1003">Cell membrane</keyword>
<keyword id="KW-0963">Cytoplasm</keyword>
<keyword id="KW-0206">Cytoskeleton</keyword>
<keyword id="KW-0903">Direct protein sequencing</keyword>
<keyword id="KW-0225">Disease variant</keyword>
<keyword id="KW-1015">Disulfide bond</keyword>
<keyword id="KW-0245">EGF-like domain</keyword>
<keyword id="KW-0955">Glaucoma</keyword>
<keyword id="KW-0325">Glycoprotein</keyword>
<keyword id="KW-0393">Immunoglobulin domain</keyword>
<keyword id="KW-0418">Kinase</keyword>
<keyword id="KW-0472">Membrane</keyword>
<keyword id="KW-0547">Nucleotide-binding</keyword>
<keyword id="KW-0597">Phosphoprotein</keyword>
<keyword id="KW-1267">Proteomics identification</keyword>
<keyword id="KW-0675">Receptor</keyword>
<keyword id="KW-1185">Reference proteome</keyword>
<keyword id="KW-0677">Repeat</keyword>
<keyword id="KW-0964">Secreted</keyword>
<keyword id="KW-0732">Signal</keyword>
<keyword id="KW-0808">Transferase</keyword>
<keyword id="KW-0812">Transmembrane</keyword>
<keyword id="KW-1133">Transmembrane helix</keyword>
<keyword id="KW-0829">Tyrosine-protein kinase</keyword>
<keyword id="KW-0832">Ubl conjugation</keyword>
<evidence type="ECO:0000255" key="1"/>
<evidence type="ECO:0000255" key="2">
    <source>
        <dbReference type="PROSITE-ProRule" id="PRU00076"/>
    </source>
</evidence>
<evidence type="ECO:0000255" key="3">
    <source>
        <dbReference type="PROSITE-ProRule" id="PRU00159"/>
    </source>
</evidence>
<evidence type="ECO:0000255" key="4">
    <source>
        <dbReference type="PROSITE-ProRule" id="PRU00316"/>
    </source>
</evidence>
<evidence type="ECO:0000255" key="5">
    <source>
        <dbReference type="PROSITE-ProRule" id="PRU10028"/>
    </source>
</evidence>
<evidence type="ECO:0000269" key="6">
    <source>
    </source>
</evidence>
<evidence type="ECO:0000269" key="7">
    <source>
    </source>
</evidence>
<evidence type="ECO:0000269" key="8">
    <source>
    </source>
</evidence>
<evidence type="ECO:0000269" key="9">
    <source>
    </source>
</evidence>
<evidence type="ECO:0000269" key="10">
    <source>
    </source>
</evidence>
<evidence type="ECO:0000269" key="11">
    <source>
    </source>
</evidence>
<evidence type="ECO:0000269" key="12">
    <source>
    </source>
</evidence>
<evidence type="ECO:0000269" key="13">
    <source>
    </source>
</evidence>
<evidence type="ECO:0000269" key="14">
    <source>
    </source>
</evidence>
<evidence type="ECO:0000269" key="15">
    <source>
    </source>
</evidence>
<evidence type="ECO:0000269" key="16">
    <source>
    </source>
</evidence>
<evidence type="ECO:0000269" key="17">
    <source>
    </source>
</evidence>
<evidence type="ECO:0000269" key="18">
    <source>
    </source>
</evidence>
<evidence type="ECO:0000269" key="19">
    <source>
    </source>
</evidence>
<evidence type="ECO:0000269" key="20">
    <source>
    </source>
</evidence>
<evidence type="ECO:0000269" key="21">
    <source>
    </source>
</evidence>
<evidence type="ECO:0000269" key="22">
    <source>
    </source>
</evidence>
<evidence type="ECO:0000269" key="23">
    <source>
    </source>
</evidence>
<evidence type="ECO:0000269" key="24">
    <source>
    </source>
</evidence>
<evidence type="ECO:0000269" key="25">
    <source>
    </source>
</evidence>
<evidence type="ECO:0000269" key="26">
    <source>
    </source>
</evidence>
<evidence type="ECO:0000269" key="27">
    <source>
    </source>
</evidence>
<evidence type="ECO:0000269" key="28">
    <source>
    </source>
</evidence>
<evidence type="ECO:0000269" key="29">
    <source>
    </source>
</evidence>
<evidence type="ECO:0000269" key="30">
    <source>
    </source>
</evidence>
<evidence type="ECO:0000269" key="31">
    <source>
    </source>
</evidence>
<evidence type="ECO:0000269" key="32">
    <source>
    </source>
</evidence>
<evidence type="ECO:0000269" key="33">
    <source>
    </source>
</evidence>
<evidence type="ECO:0000269" key="34">
    <source>
    </source>
</evidence>
<evidence type="ECO:0000269" key="35">
    <source>
    </source>
</evidence>
<evidence type="ECO:0000269" key="36">
    <source>
    </source>
</evidence>
<evidence type="ECO:0000269" key="37">
    <source>
    </source>
</evidence>
<evidence type="ECO:0000269" key="38">
    <source>
    </source>
</evidence>
<evidence type="ECO:0000269" key="39">
    <source ref="33"/>
</evidence>
<evidence type="ECO:0000269" key="40">
    <source ref="4"/>
</evidence>
<evidence type="ECO:0000303" key="41">
    <source>
    </source>
</evidence>
<evidence type="ECO:0000303" key="42">
    <source>
    </source>
</evidence>
<evidence type="ECO:0000305" key="43"/>
<evidence type="ECO:0000305" key="44">
    <source>
    </source>
</evidence>
<evidence type="ECO:0000305" key="45">
    <source>
    </source>
</evidence>
<evidence type="ECO:0000312" key="46">
    <source>
        <dbReference type="HGNC" id="HGNC:11724"/>
    </source>
</evidence>
<evidence type="ECO:0007829" key="47">
    <source>
        <dbReference type="PDB" id="1FVR"/>
    </source>
</evidence>
<evidence type="ECO:0007829" key="48">
    <source>
        <dbReference type="PDB" id="2GY5"/>
    </source>
</evidence>
<evidence type="ECO:0007829" key="49">
    <source>
        <dbReference type="PDB" id="2OO8"/>
    </source>
</evidence>
<evidence type="ECO:0007829" key="50">
    <source>
        <dbReference type="PDB" id="2P4I"/>
    </source>
</evidence>
<evidence type="ECO:0007829" key="51">
    <source>
        <dbReference type="PDB" id="5MYA"/>
    </source>
</evidence>
<evidence type="ECO:0007829" key="52">
    <source>
        <dbReference type="PDB" id="5UTK"/>
    </source>
</evidence>
<evidence type="ECO:0007829" key="53">
    <source>
        <dbReference type="PDB" id="6MWE"/>
    </source>
</evidence>
<evidence type="ECO:0007829" key="54">
    <source>
        <dbReference type="PDB" id="7E72"/>
    </source>
</evidence>
<organism>
    <name type="scientific">Homo sapiens</name>
    <name type="common">Human</name>
    <dbReference type="NCBI Taxonomy" id="9606"/>
    <lineage>
        <taxon>Eukaryota</taxon>
        <taxon>Metazoa</taxon>
        <taxon>Chordata</taxon>
        <taxon>Craniata</taxon>
        <taxon>Vertebrata</taxon>
        <taxon>Euteleostomi</taxon>
        <taxon>Mammalia</taxon>
        <taxon>Eutheria</taxon>
        <taxon>Euarchontoglires</taxon>
        <taxon>Primates</taxon>
        <taxon>Haplorrhini</taxon>
        <taxon>Catarrhini</taxon>
        <taxon>Hominidae</taxon>
        <taxon>Homo</taxon>
    </lineage>
</organism>
<sequence>MDSLASLVLCGVSLLLSGTVEGAMDLILINSLPLVSDAETSLTCIASGWRPHEPITIGRDFEALMNQHQDPLEVTQDVTREWAKKVVWKREKASKINGAYFCEGRVRGEAIRIRTMKMRQQASFLPATLTMTVDKGDNVNISFKKVLIKEEDAVIYKNGSFIHSVPRHEVPDILEVHLPHAQPQDAGVYSARYIGGNLFTSAFTRLIVRRCEAQKWGPECNHLCTACMNNGVCHEDTGECICPPGFMGRTCEKACELHTFGRTCKERCSGQEGCKSYVFCLPDPYGCSCATGWKGLQCNEACHPGFYGPDCKLRCSCNNGEMCDRFQGCLCSPGWQGLQCEREGIQRMTPKIVDLPDHIEVNSGKFNPICKASGWPLPTNEEMTLVKPDGTVLHPKDFNHTDHFSVAIFTIHRILPPDSGVWVCSVNTVAGMVEKPFNISVKVLPKPLNAPNVIDTGHNFAVINISSEPYFGDGPIKSKKLLYKPVNHYEAWQHIQVTNEIVTLNYLEPRTEYELCVQLVRRGEGGEGHPGPVRRFTTASIGLPPPRGLNLLPKSQTTLNLTWQPIFPSSEDDFYVEVERRSVQKSDQQNIKVPGNLTSVLLNNLHPREQYVVRARVNTKAQGEWSEDLTAWTLSDILPPQPENIKISNITHSSAVISWTILDGYSISSITIRYKVQGKNEDQHVDVKIKNATITQYQLKGLEPETAYQVDIFAENNIGSSNPAFSHELVTLPESQAPADLGGGKMLLIAILGSAGMTCLTVLLAFLIILQLKRANVQRRMAQAFQNVREEPAVQFNSGTLALNRKVKNNPDPTIYPVLDWNDIKFQDVIGEGNFGQVLKARIKKDGLRMDAAIKRMKEYASKDDHRDFAGELEVLCKLGHHPNIINLLGACEHRGYLYLAIEYAPHGNLLDFLRKSRVLETDPAFAIANSTASTLSSQQLLHFAADVARGMDYLSQKQFIHRDLAARNILVGENYVAKIADFGLSRGQEVYVKKTMGRLPVRWMAIESLNYSVYTTNSDVWSYGVLLWEIVSLGGTPYCGMTCAELYEKLPQGYRLEKPLNCDDEVYDLMRQCWREKPYERPSFAQILVSLNRMLEERKTYVNTTLYEKFTYAGIDCSAEEAA</sequence>
<gene>
    <name evidence="46" type="primary">TEK</name>
    <name evidence="42" type="synonym">TIE2</name>
    <name type="synonym">VMCM</name>
    <name type="synonym">VMCM1</name>
</gene>
<dbReference type="EC" id="2.7.10.1" evidence="12 17"/>
<dbReference type="EMBL" id="L06139">
    <property type="protein sequence ID" value="AAA61139.1"/>
    <property type="molecule type" value="mRNA"/>
</dbReference>
<dbReference type="EMBL" id="AK291775">
    <property type="protein sequence ID" value="BAF84464.1"/>
    <property type="molecule type" value="mRNA"/>
</dbReference>
<dbReference type="EMBL" id="AK294887">
    <property type="protein sequence ID" value="BAG57981.1"/>
    <property type="molecule type" value="mRNA"/>
</dbReference>
<dbReference type="EMBL" id="AK295043">
    <property type="protein sequence ID" value="BAG58094.1"/>
    <property type="molecule type" value="mRNA"/>
</dbReference>
<dbReference type="EMBL" id="AL133411">
    <property type="status" value="NOT_ANNOTATED_CDS"/>
    <property type="molecule type" value="Genomic_DNA"/>
</dbReference>
<dbReference type="EMBL" id="AL355432">
    <property type="status" value="NOT_ANNOTATED_CDS"/>
    <property type="molecule type" value="Genomic_DNA"/>
</dbReference>
<dbReference type="EMBL" id="AL355433">
    <property type="status" value="NOT_ANNOTATED_CDS"/>
    <property type="molecule type" value="Genomic_DNA"/>
</dbReference>
<dbReference type="EMBL" id="CH471071">
    <property type="protein sequence ID" value="EAW58571.1"/>
    <property type="molecule type" value="Genomic_DNA"/>
</dbReference>
<dbReference type="EMBL" id="CH471071">
    <property type="protein sequence ID" value="EAW58572.1"/>
    <property type="molecule type" value="Genomic_DNA"/>
</dbReference>
<dbReference type="EMBL" id="BC035514">
    <property type="protein sequence ID" value="AAH35514.2"/>
    <property type="molecule type" value="mRNA"/>
</dbReference>
<dbReference type="CCDS" id="CCDS6519.1">
    <molecule id="Q02763-1"/>
</dbReference>
<dbReference type="CCDS" id="CCDS75825.1">
    <molecule id="Q02763-2"/>
</dbReference>
<dbReference type="CCDS" id="CCDS78389.1">
    <molecule id="Q02763-3"/>
</dbReference>
<dbReference type="PIR" id="I58388">
    <property type="entry name" value="I58388"/>
</dbReference>
<dbReference type="RefSeq" id="NP_000450.3">
    <molecule id="Q02763-1"/>
    <property type="nucleotide sequence ID" value="NM_000459.5"/>
</dbReference>
<dbReference type="RefSeq" id="NP_001277006.2">
    <molecule id="Q02763-2"/>
    <property type="nucleotide sequence ID" value="NM_001290077.2"/>
</dbReference>
<dbReference type="RefSeq" id="NP_001277007.2">
    <molecule id="Q02763-3"/>
    <property type="nucleotide sequence ID" value="NM_001290078.2"/>
</dbReference>
<dbReference type="PDB" id="1FVR">
    <property type="method" value="X-ray"/>
    <property type="resolution" value="2.20 A"/>
    <property type="chains" value="A/B=808-1124"/>
</dbReference>
<dbReference type="PDB" id="2GY5">
    <property type="method" value="X-ray"/>
    <property type="resolution" value="2.90 A"/>
    <property type="chains" value="A=23-445"/>
</dbReference>
<dbReference type="PDB" id="2GY7">
    <property type="method" value="X-ray"/>
    <property type="resolution" value="3.70 A"/>
    <property type="chains" value="B=23-445"/>
</dbReference>
<dbReference type="PDB" id="2OO8">
    <property type="method" value="X-ray"/>
    <property type="resolution" value="2.20 A"/>
    <property type="chains" value="X=808-1124"/>
</dbReference>
<dbReference type="PDB" id="2OSC">
    <property type="method" value="X-ray"/>
    <property type="resolution" value="2.80 A"/>
    <property type="chains" value="A=808-1124"/>
</dbReference>
<dbReference type="PDB" id="2P4I">
    <property type="method" value="X-ray"/>
    <property type="resolution" value="2.50 A"/>
    <property type="chains" value="A/B=808-1124"/>
</dbReference>
<dbReference type="PDB" id="2WQB">
    <property type="method" value="X-ray"/>
    <property type="resolution" value="2.95 A"/>
    <property type="chains" value="A=802-1124"/>
</dbReference>
<dbReference type="PDB" id="3BEA">
    <property type="method" value="X-ray"/>
    <property type="resolution" value="2.02 A"/>
    <property type="chains" value="A=917-935"/>
</dbReference>
<dbReference type="PDB" id="3L8P">
    <property type="method" value="X-ray"/>
    <property type="resolution" value="2.40 A"/>
    <property type="chains" value="A=808-1124"/>
</dbReference>
<dbReference type="PDB" id="4K0V">
    <property type="method" value="X-ray"/>
    <property type="resolution" value="4.51 A"/>
    <property type="chains" value="A=23-542"/>
</dbReference>
<dbReference type="PDB" id="4X3J">
    <property type="method" value="X-ray"/>
    <property type="resolution" value="2.50 A"/>
    <property type="chains" value="A=802-1122"/>
</dbReference>
<dbReference type="PDB" id="5MYA">
    <property type="method" value="X-ray"/>
    <property type="resolution" value="2.90 A"/>
    <property type="chains" value="A/B=443-742"/>
</dbReference>
<dbReference type="PDB" id="5MYB">
    <property type="method" value="X-ray"/>
    <property type="resolution" value="2.60 A"/>
    <property type="chains" value="A/B=443-742"/>
</dbReference>
<dbReference type="PDB" id="5UTK">
    <property type="method" value="X-ray"/>
    <property type="resolution" value="2.50 A"/>
    <property type="chains" value="A/B=442-741"/>
</dbReference>
<dbReference type="PDB" id="6MWE">
    <property type="method" value="X-ray"/>
    <property type="resolution" value="2.05 A"/>
    <property type="chains" value="A/B=808-1124"/>
</dbReference>
<dbReference type="PDB" id="7E72">
    <property type="method" value="X-ray"/>
    <property type="resolution" value="2.09 A"/>
    <property type="chains" value="E/F=541-735"/>
</dbReference>
<dbReference type="PDBsum" id="1FVR"/>
<dbReference type="PDBsum" id="2GY5"/>
<dbReference type="PDBsum" id="2GY7"/>
<dbReference type="PDBsum" id="2OO8"/>
<dbReference type="PDBsum" id="2OSC"/>
<dbReference type="PDBsum" id="2P4I"/>
<dbReference type="PDBsum" id="2WQB"/>
<dbReference type="PDBsum" id="3BEA"/>
<dbReference type="PDBsum" id="3L8P"/>
<dbReference type="PDBsum" id="4K0V"/>
<dbReference type="PDBsum" id="4X3J"/>
<dbReference type="PDBsum" id="5MYA"/>
<dbReference type="PDBsum" id="5MYB"/>
<dbReference type="PDBsum" id="5UTK"/>
<dbReference type="PDBsum" id="6MWE"/>
<dbReference type="PDBsum" id="7E72"/>
<dbReference type="SMR" id="Q02763"/>
<dbReference type="BioGRID" id="112869">
    <property type="interactions" value="110"/>
</dbReference>
<dbReference type="CORUM" id="Q02763"/>
<dbReference type="DIP" id="DIP-6047N"/>
<dbReference type="FunCoup" id="Q02763">
    <property type="interactions" value="859"/>
</dbReference>
<dbReference type="IntAct" id="Q02763">
    <property type="interactions" value="114"/>
</dbReference>
<dbReference type="MINT" id="Q02763"/>
<dbReference type="STRING" id="9606.ENSP00000369375"/>
<dbReference type="BindingDB" id="Q02763"/>
<dbReference type="ChEMBL" id="CHEMBL4128"/>
<dbReference type="DrugBank" id="DB17191">
    <property type="generic name" value="Altiratinib"/>
</dbReference>
<dbReference type="DrugBank" id="DB00415">
    <property type="generic name" value="Ampicillin"/>
</dbReference>
<dbReference type="DrugBank" id="DB12010">
    <property type="generic name" value="Fostamatinib"/>
</dbReference>
<dbReference type="DrugBank" id="DB08221">
    <property type="generic name" value="N-{4-METHYL-3-[(3-PYRIMIDIN-4-YLPYRIDIN-2-YL)AMINO]PHENYL}-3-(TRIFLUOROMETHYL)BENZAMIDE"/>
</dbReference>
<dbReference type="DrugBank" id="DB16294">
    <property type="generic name" value="Pexmetinib"/>
</dbReference>
<dbReference type="DrugBank" id="DB08901">
    <property type="generic name" value="Ponatinib"/>
</dbReference>
<dbReference type="DrugBank" id="DB16353">
    <property type="generic name" value="Razuprotafib"/>
</dbReference>
<dbReference type="DrugBank" id="DB13005">
    <property type="generic name" value="Rebastinib"/>
</dbReference>
<dbReference type="DrugBank" id="DB08896">
    <property type="generic name" value="Regorafenib"/>
</dbReference>
<dbReference type="DrugBank" id="DB14840">
    <property type="generic name" value="Ripretinib"/>
</dbReference>
<dbReference type="DrugBank" id="DB11800">
    <property type="generic name" value="Tivozanib"/>
</dbReference>
<dbReference type="DrugBank" id="DB05294">
    <property type="generic name" value="Vandetanib"/>
</dbReference>
<dbReference type="DrugCentral" id="Q02763"/>
<dbReference type="GuidetoPHARMACOLOGY" id="1842"/>
<dbReference type="GlyConnect" id="769">
    <property type="glycosylation" value="10 N-Linked glycans (5 sites)"/>
</dbReference>
<dbReference type="GlyCosmos" id="Q02763">
    <property type="glycosylation" value="10 sites, 11 glycans"/>
</dbReference>
<dbReference type="GlyGen" id="Q02763">
    <property type="glycosylation" value="10 sites, 10 N-linked glycans (5 sites)"/>
</dbReference>
<dbReference type="iPTMnet" id="Q02763"/>
<dbReference type="PhosphoSitePlus" id="Q02763"/>
<dbReference type="BioMuta" id="TEK"/>
<dbReference type="DMDM" id="218511853"/>
<dbReference type="CPTAC" id="CPTAC-2891"/>
<dbReference type="CPTAC" id="CPTAC-2892"/>
<dbReference type="jPOST" id="Q02763"/>
<dbReference type="MassIVE" id="Q02763"/>
<dbReference type="PaxDb" id="9606-ENSP00000369375"/>
<dbReference type="PeptideAtlas" id="Q02763"/>
<dbReference type="ProteomicsDB" id="58121">
    <molecule id="Q02763-1"/>
</dbReference>
<dbReference type="ProteomicsDB" id="58122">
    <molecule id="Q02763-2"/>
</dbReference>
<dbReference type="ProteomicsDB" id="58123">
    <molecule id="Q02763-3"/>
</dbReference>
<dbReference type="ABCD" id="Q02763">
    <property type="antibodies" value="9 sequenced antibodies"/>
</dbReference>
<dbReference type="Antibodypedia" id="2050">
    <property type="antibodies" value="1421 antibodies from 44 providers"/>
</dbReference>
<dbReference type="DNASU" id="7010"/>
<dbReference type="Ensembl" id="ENST00000380036.10">
    <molecule id="Q02763-1"/>
    <property type="protein sequence ID" value="ENSP00000369375.4"/>
    <property type="gene ID" value="ENSG00000120156.22"/>
</dbReference>
<dbReference type="Ensembl" id="ENST00000406359.8">
    <molecule id="Q02763-2"/>
    <property type="protein sequence ID" value="ENSP00000383977.4"/>
    <property type="gene ID" value="ENSG00000120156.22"/>
</dbReference>
<dbReference type="Ensembl" id="ENST00000519097.5">
    <molecule id="Q02763-3"/>
    <property type="protein sequence ID" value="ENSP00000430686.1"/>
    <property type="gene ID" value="ENSG00000120156.22"/>
</dbReference>
<dbReference type="GeneID" id="7010"/>
<dbReference type="KEGG" id="hsa:7010"/>
<dbReference type="MANE-Select" id="ENST00000380036.10">
    <property type="protein sequence ID" value="ENSP00000369375.4"/>
    <property type="RefSeq nucleotide sequence ID" value="NM_000459.5"/>
    <property type="RefSeq protein sequence ID" value="NP_000450.3"/>
</dbReference>
<dbReference type="UCSC" id="uc003zqi.5">
    <molecule id="Q02763-1"/>
    <property type="organism name" value="human"/>
</dbReference>
<dbReference type="AGR" id="HGNC:11724"/>
<dbReference type="CTD" id="7010"/>
<dbReference type="DisGeNET" id="7010"/>
<dbReference type="GeneCards" id="TEK"/>
<dbReference type="GeneReviews" id="TEK"/>
<dbReference type="HGNC" id="HGNC:11724">
    <property type="gene designation" value="TEK"/>
</dbReference>
<dbReference type="HPA" id="ENSG00000120156">
    <property type="expression patterns" value="Tissue enhanced (placenta)"/>
</dbReference>
<dbReference type="MalaCards" id="TEK"/>
<dbReference type="MIM" id="600195">
    <property type="type" value="phenotype"/>
</dbReference>
<dbReference type="MIM" id="600221">
    <property type="type" value="gene"/>
</dbReference>
<dbReference type="MIM" id="617272">
    <property type="type" value="phenotype"/>
</dbReference>
<dbReference type="neXtProt" id="NX_Q02763"/>
<dbReference type="OpenTargets" id="ENSG00000120156"/>
<dbReference type="Orphanet" id="1059">
    <property type="disease" value="Blue rubber bleb nevus"/>
</dbReference>
<dbReference type="Orphanet" id="98976">
    <property type="disease" value="Congenital glaucoma"/>
</dbReference>
<dbReference type="Orphanet" id="2451">
    <property type="disease" value="Mucocutaneous venous malformations"/>
</dbReference>
<dbReference type="PharmGKB" id="PA36441"/>
<dbReference type="VEuPathDB" id="HostDB:ENSG00000120156"/>
<dbReference type="eggNOG" id="KOG0200">
    <property type="taxonomic scope" value="Eukaryota"/>
</dbReference>
<dbReference type="GeneTree" id="ENSGT00940000158840"/>
<dbReference type="HOGENOM" id="CLU_008888_0_0_1"/>
<dbReference type="InParanoid" id="Q02763"/>
<dbReference type="OMA" id="APYNIKF"/>
<dbReference type="OrthoDB" id="1668230at2759"/>
<dbReference type="PAN-GO" id="Q02763">
    <property type="GO annotations" value="13 GO annotations based on evolutionary models"/>
</dbReference>
<dbReference type="PhylomeDB" id="Q02763"/>
<dbReference type="TreeFam" id="TF317568"/>
<dbReference type="BRENDA" id="2.7.10.1">
    <property type="organism ID" value="2681"/>
</dbReference>
<dbReference type="PathwayCommons" id="Q02763"/>
<dbReference type="Reactome" id="R-HSA-210993">
    <property type="pathway name" value="Tie2 Signaling"/>
</dbReference>
<dbReference type="Reactome" id="R-HSA-5673001">
    <property type="pathway name" value="RAF/MAP kinase cascade"/>
</dbReference>
<dbReference type="SignaLink" id="Q02763"/>
<dbReference type="SIGNOR" id="Q02763"/>
<dbReference type="BioGRID-ORCS" id="7010">
    <property type="hits" value="5 hits in 1192 CRISPR screens"/>
</dbReference>
<dbReference type="ChiTaRS" id="TEK">
    <property type="organism name" value="human"/>
</dbReference>
<dbReference type="EvolutionaryTrace" id="Q02763"/>
<dbReference type="GeneWiki" id="TEK_tyrosine_kinase"/>
<dbReference type="GenomeRNAi" id="7010"/>
<dbReference type="Pharos" id="Q02763">
    <property type="development level" value="Tclin"/>
</dbReference>
<dbReference type="PRO" id="PR:Q02763"/>
<dbReference type="Proteomes" id="UP000005640">
    <property type="component" value="Chromosome 9"/>
</dbReference>
<dbReference type="RNAct" id="Q02763">
    <property type="molecule type" value="protein"/>
</dbReference>
<dbReference type="Bgee" id="ENSG00000120156">
    <property type="expression patterns" value="Expressed in right lung and 156 other cell types or tissues"/>
</dbReference>
<dbReference type="ExpressionAtlas" id="Q02763">
    <property type="expression patterns" value="baseline and differential"/>
</dbReference>
<dbReference type="GO" id="GO:0016324">
    <property type="term" value="C:apical plasma membrane"/>
    <property type="evidence" value="ECO:0000314"/>
    <property type="project" value="UniProtKB"/>
</dbReference>
<dbReference type="GO" id="GO:0009925">
    <property type="term" value="C:basal plasma membrane"/>
    <property type="evidence" value="ECO:0000314"/>
    <property type="project" value="UniProtKB"/>
</dbReference>
<dbReference type="GO" id="GO:0016323">
    <property type="term" value="C:basolateral plasma membrane"/>
    <property type="evidence" value="ECO:0000314"/>
    <property type="project" value="UniProtKB"/>
</dbReference>
<dbReference type="GO" id="GO:0009986">
    <property type="term" value="C:cell surface"/>
    <property type="evidence" value="ECO:0000314"/>
    <property type="project" value="UniProtKB"/>
</dbReference>
<dbReference type="GO" id="GO:0005911">
    <property type="term" value="C:cell-cell junction"/>
    <property type="evidence" value="ECO:0000314"/>
    <property type="project" value="UniProtKB"/>
</dbReference>
<dbReference type="GO" id="GO:0005813">
    <property type="term" value="C:centrosome"/>
    <property type="evidence" value="ECO:0000314"/>
    <property type="project" value="HPA"/>
</dbReference>
<dbReference type="GO" id="GO:0036064">
    <property type="term" value="C:ciliary basal body"/>
    <property type="evidence" value="ECO:0000314"/>
    <property type="project" value="HPA"/>
</dbReference>
<dbReference type="GO" id="GO:0005737">
    <property type="term" value="C:cytoplasm"/>
    <property type="evidence" value="ECO:0007669"/>
    <property type="project" value="UniProtKB-KW"/>
</dbReference>
<dbReference type="GO" id="GO:0005576">
    <property type="term" value="C:extracellular region"/>
    <property type="evidence" value="ECO:0007669"/>
    <property type="project" value="UniProtKB-SubCell"/>
</dbReference>
<dbReference type="GO" id="GO:0005925">
    <property type="term" value="C:focal adhesion"/>
    <property type="evidence" value="ECO:0007669"/>
    <property type="project" value="UniProtKB-SubCell"/>
</dbReference>
<dbReference type="GO" id="GO:0045121">
    <property type="term" value="C:membrane raft"/>
    <property type="evidence" value="ECO:0000314"/>
    <property type="project" value="UniProtKB"/>
</dbReference>
<dbReference type="GO" id="GO:0005902">
    <property type="term" value="C:microvillus"/>
    <property type="evidence" value="ECO:0000314"/>
    <property type="project" value="UniProtKB"/>
</dbReference>
<dbReference type="GO" id="GO:0005886">
    <property type="term" value="C:plasma membrane"/>
    <property type="evidence" value="ECO:0000314"/>
    <property type="project" value="HPA"/>
</dbReference>
<dbReference type="GO" id="GO:0043235">
    <property type="term" value="C:receptor complex"/>
    <property type="evidence" value="ECO:0000318"/>
    <property type="project" value="GO_Central"/>
</dbReference>
<dbReference type="GO" id="GO:0005524">
    <property type="term" value="F:ATP binding"/>
    <property type="evidence" value="ECO:0007669"/>
    <property type="project" value="UniProtKB-KW"/>
</dbReference>
<dbReference type="GO" id="GO:0042802">
    <property type="term" value="F:identical protein binding"/>
    <property type="evidence" value="ECO:0000353"/>
    <property type="project" value="UniProtKB"/>
</dbReference>
<dbReference type="GO" id="GO:0004672">
    <property type="term" value="F:protein kinase activity"/>
    <property type="evidence" value="ECO:0000304"/>
    <property type="project" value="ProtInc"/>
</dbReference>
<dbReference type="GO" id="GO:0038023">
    <property type="term" value="F:signaling receptor activity"/>
    <property type="evidence" value="ECO:0000304"/>
    <property type="project" value="ProtInc"/>
</dbReference>
<dbReference type="GO" id="GO:0004714">
    <property type="term" value="F:transmembrane receptor protein tyrosine kinase activity"/>
    <property type="evidence" value="ECO:0000314"/>
    <property type="project" value="UniProtKB"/>
</dbReference>
<dbReference type="GO" id="GO:0001525">
    <property type="term" value="P:angiogenesis"/>
    <property type="evidence" value="ECO:0000250"/>
    <property type="project" value="UniProtKB"/>
</dbReference>
<dbReference type="GO" id="GO:0007169">
    <property type="term" value="P:cell surface receptor protein tyrosine kinase signaling pathway"/>
    <property type="evidence" value="ECO:0000314"/>
    <property type="project" value="UniProtKB"/>
</dbReference>
<dbReference type="GO" id="GO:0007166">
    <property type="term" value="P:cell surface receptor signaling pathway"/>
    <property type="evidence" value="ECO:0000315"/>
    <property type="project" value="ARUK-UCL"/>
</dbReference>
<dbReference type="GO" id="GO:0007267">
    <property type="term" value="P:cell-cell signaling"/>
    <property type="evidence" value="ECO:0000304"/>
    <property type="project" value="ProtInc"/>
</dbReference>
<dbReference type="GO" id="GO:0071260">
    <property type="term" value="P:cellular response to mechanical stimulus"/>
    <property type="evidence" value="ECO:0000315"/>
    <property type="project" value="ARUK-UCL"/>
</dbReference>
<dbReference type="GO" id="GO:0060216">
    <property type="term" value="P:definitive hemopoiesis"/>
    <property type="evidence" value="ECO:0000304"/>
    <property type="project" value="UniProtKB"/>
</dbReference>
<dbReference type="GO" id="GO:0001935">
    <property type="term" value="P:endothelial cell proliferation"/>
    <property type="evidence" value="ECO:0000250"/>
    <property type="project" value="UniProtKB"/>
</dbReference>
<dbReference type="GO" id="GO:0072012">
    <property type="term" value="P:glomerulus vasculature development"/>
    <property type="evidence" value="ECO:0000250"/>
    <property type="project" value="UniProtKB"/>
</dbReference>
<dbReference type="GO" id="GO:0007507">
    <property type="term" value="P:heart development"/>
    <property type="evidence" value="ECO:0000250"/>
    <property type="project" value="UniProtKB"/>
</dbReference>
<dbReference type="GO" id="GO:0060347">
    <property type="term" value="P:heart trabecula formation"/>
    <property type="evidence" value="ECO:0000250"/>
    <property type="project" value="UniProtKB"/>
</dbReference>
<dbReference type="GO" id="GO:0016525">
    <property type="term" value="P:negative regulation of angiogenesis"/>
    <property type="evidence" value="ECO:0000315"/>
    <property type="project" value="UniProtKB"/>
</dbReference>
<dbReference type="GO" id="GO:0043066">
    <property type="term" value="P:negative regulation of apoptotic process"/>
    <property type="evidence" value="ECO:0000304"/>
    <property type="project" value="UniProtKB"/>
</dbReference>
<dbReference type="GO" id="GO:2000352">
    <property type="term" value="P:negative regulation of endothelial cell apoptotic process"/>
    <property type="evidence" value="ECO:0000250"/>
    <property type="project" value="UniProtKB"/>
</dbReference>
<dbReference type="GO" id="GO:0050728">
    <property type="term" value="P:negative regulation of inflammatory response"/>
    <property type="evidence" value="ECO:0000304"/>
    <property type="project" value="UniProtKB"/>
</dbReference>
<dbReference type="GO" id="GO:0045766">
    <property type="term" value="P:positive regulation of angiogenesis"/>
    <property type="evidence" value="ECO:0000314"/>
    <property type="project" value="UniProtKB"/>
</dbReference>
<dbReference type="GO" id="GO:0010595">
    <property type="term" value="P:positive regulation of endothelial cell migration"/>
    <property type="evidence" value="ECO:0000314"/>
    <property type="project" value="UniProtKB"/>
</dbReference>
<dbReference type="GO" id="GO:0001938">
    <property type="term" value="P:positive regulation of endothelial cell proliferation"/>
    <property type="evidence" value="ECO:0000304"/>
    <property type="project" value="UniProtKB"/>
</dbReference>
<dbReference type="GO" id="GO:0070374">
    <property type="term" value="P:positive regulation of ERK1 and ERK2 cascade"/>
    <property type="evidence" value="ECO:0000314"/>
    <property type="project" value="UniProtKB"/>
</dbReference>
<dbReference type="GO" id="GO:0051894">
    <property type="term" value="P:positive regulation of focal adhesion assembly"/>
    <property type="evidence" value="ECO:0000315"/>
    <property type="project" value="UniProtKB"/>
</dbReference>
<dbReference type="GO" id="GO:1902533">
    <property type="term" value="P:positive regulation of intracellular signal transduction"/>
    <property type="evidence" value="ECO:0000315"/>
    <property type="project" value="UniProtKB"/>
</dbReference>
<dbReference type="GO" id="GO:0043410">
    <property type="term" value="P:positive regulation of MAPK cascade"/>
    <property type="evidence" value="ECO:0000315"/>
    <property type="project" value="ARUK-UCL"/>
</dbReference>
<dbReference type="GO" id="GO:0051897">
    <property type="term" value="P:positive regulation of phosphatidylinositol 3-kinase/protein kinase B signal transduction"/>
    <property type="evidence" value="ECO:0000314"/>
    <property type="project" value="UniProtKB"/>
</dbReference>
<dbReference type="GO" id="GO:0035022">
    <property type="term" value="P:positive regulation of Rac protein signal transduction"/>
    <property type="evidence" value="ECO:0000315"/>
    <property type="project" value="GO_Central"/>
</dbReference>
<dbReference type="GO" id="GO:0035025">
    <property type="term" value="P:positive regulation of Rho protein signal transduction"/>
    <property type="evidence" value="ECO:0000315"/>
    <property type="project" value="GO_Central"/>
</dbReference>
<dbReference type="GO" id="GO:2000351">
    <property type="term" value="P:regulation of endothelial cell apoptotic process"/>
    <property type="evidence" value="ECO:0000304"/>
    <property type="project" value="UniProtKB"/>
</dbReference>
<dbReference type="GO" id="GO:0032878">
    <property type="term" value="P:regulation of establishment or maintenance of cell polarity"/>
    <property type="evidence" value="ECO:0000315"/>
    <property type="project" value="UniProtKB"/>
</dbReference>
<dbReference type="GO" id="GO:0043114">
    <property type="term" value="P:regulation of vascular permeability"/>
    <property type="evidence" value="ECO:0000304"/>
    <property type="project" value="UniProtKB"/>
</dbReference>
<dbReference type="GO" id="GO:0002040">
    <property type="term" value="P:sprouting angiogenesis"/>
    <property type="evidence" value="ECO:0000315"/>
    <property type="project" value="UniProtKB"/>
</dbReference>
<dbReference type="GO" id="GO:0034446">
    <property type="term" value="P:substrate adhesion-dependent cell spreading"/>
    <property type="evidence" value="ECO:0000315"/>
    <property type="project" value="UniProtKB"/>
</dbReference>
<dbReference type="GO" id="GO:0048014">
    <property type="term" value="P:Tie signaling pathway"/>
    <property type="evidence" value="ECO:0000314"/>
    <property type="project" value="UniProtKB"/>
</dbReference>
<dbReference type="CDD" id="cd00055">
    <property type="entry name" value="EGF_Lam"/>
    <property type="match status" value="2"/>
</dbReference>
<dbReference type="CDD" id="cd00063">
    <property type="entry name" value="FN3"/>
    <property type="match status" value="2"/>
</dbReference>
<dbReference type="CDD" id="cd20964">
    <property type="entry name" value="IgI_Tie2"/>
    <property type="match status" value="1"/>
</dbReference>
<dbReference type="CDD" id="cd05088">
    <property type="entry name" value="PTKc_Tie2"/>
    <property type="match status" value="1"/>
</dbReference>
<dbReference type="FunFam" id="2.60.40.10:FF:000397">
    <property type="entry name" value="angiopoietin-1 receptor isoform X1"/>
    <property type="match status" value="1"/>
</dbReference>
<dbReference type="FunFam" id="2.60.40.10:FF:000407">
    <property type="entry name" value="angiopoietin-1 receptor isoform X1"/>
    <property type="match status" value="1"/>
</dbReference>
<dbReference type="FunFam" id="2.60.40.10:FF:000406">
    <property type="entry name" value="angiopoietin-1 receptor isoform X2"/>
    <property type="match status" value="1"/>
</dbReference>
<dbReference type="FunFam" id="3.30.200.20:FF:000113">
    <property type="entry name" value="Putative tyrosine-protein kinase receptor Tie-1"/>
    <property type="match status" value="1"/>
</dbReference>
<dbReference type="FunFam" id="2.60.40.10:FF:000388">
    <property type="entry name" value="TEK receptor tyrosine kinase"/>
    <property type="match status" value="1"/>
</dbReference>
<dbReference type="FunFam" id="2.60.40.10:FF:000391">
    <property type="entry name" value="TEK receptor tyrosine kinase"/>
    <property type="match status" value="1"/>
</dbReference>
<dbReference type="FunFam" id="2.60.40.10:FF:000441">
    <property type="entry name" value="TEK receptor tyrosine kinase"/>
    <property type="match status" value="1"/>
</dbReference>
<dbReference type="FunFam" id="1.10.510.10:FF:000123">
    <property type="entry name" value="Tyrosine-protein kinase receptor Tie-1"/>
    <property type="match status" value="1"/>
</dbReference>
<dbReference type="FunFam" id="2.170.300.10:FF:000003">
    <property type="entry name" value="tyrosine-protein kinase receptor Tie-1 isoform X1"/>
    <property type="match status" value="1"/>
</dbReference>
<dbReference type="Gene3D" id="2.60.40.10">
    <property type="entry name" value="Immunoglobulins"/>
    <property type="match status" value="6"/>
</dbReference>
<dbReference type="Gene3D" id="3.30.200.20">
    <property type="entry name" value="Phosphorylase Kinase, domain 1"/>
    <property type="match status" value="1"/>
</dbReference>
<dbReference type="Gene3D" id="2.170.300.10">
    <property type="entry name" value="Tie2 ligand-binding domain superfamily"/>
    <property type="match status" value="1"/>
</dbReference>
<dbReference type="Gene3D" id="1.10.510.10">
    <property type="entry name" value="Transferase(Phosphotransferase) domain 1"/>
    <property type="match status" value="1"/>
</dbReference>
<dbReference type="InterPro" id="IPR000742">
    <property type="entry name" value="EGF-like_dom"/>
</dbReference>
<dbReference type="InterPro" id="IPR003961">
    <property type="entry name" value="FN3_dom"/>
</dbReference>
<dbReference type="InterPro" id="IPR036116">
    <property type="entry name" value="FN3_sf"/>
</dbReference>
<dbReference type="InterPro" id="IPR007110">
    <property type="entry name" value="Ig-like_dom"/>
</dbReference>
<dbReference type="InterPro" id="IPR036179">
    <property type="entry name" value="Ig-like_dom_sf"/>
</dbReference>
<dbReference type="InterPro" id="IPR013783">
    <property type="entry name" value="Ig-like_fold"/>
</dbReference>
<dbReference type="InterPro" id="IPR011009">
    <property type="entry name" value="Kinase-like_dom_sf"/>
</dbReference>
<dbReference type="InterPro" id="IPR002049">
    <property type="entry name" value="LE_dom"/>
</dbReference>
<dbReference type="InterPro" id="IPR000719">
    <property type="entry name" value="Prot_kinase_dom"/>
</dbReference>
<dbReference type="InterPro" id="IPR017441">
    <property type="entry name" value="Protein_kinase_ATP_BS"/>
</dbReference>
<dbReference type="InterPro" id="IPR050122">
    <property type="entry name" value="RTK"/>
</dbReference>
<dbReference type="InterPro" id="IPR001245">
    <property type="entry name" value="Ser-Thr/Tyr_kinase_cat_dom"/>
</dbReference>
<dbReference type="InterPro" id="IPR018941">
    <property type="entry name" value="Tyr_kin_Tie2_Ig-like_dom-1_N"/>
</dbReference>
<dbReference type="InterPro" id="IPR008266">
    <property type="entry name" value="Tyr_kinase_AS"/>
</dbReference>
<dbReference type="InterPro" id="IPR020635">
    <property type="entry name" value="Tyr_kinase_cat_dom"/>
</dbReference>
<dbReference type="PANTHER" id="PTHR24416:SF125">
    <property type="entry name" value="ANGIOPOIETIN-1 RECEPTOR"/>
    <property type="match status" value="1"/>
</dbReference>
<dbReference type="PANTHER" id="PTHR24416">
    <property type="entry name" value="TYROSINE-PROTEIN KINASE RECEPTOR"/>
    <property type="match status" value="1"/>
</dbReference>
<dbReference type="Pfam" id="PF00041">
    <property type="entry name" value="fn3"/>
    <property type="match status" value="2"/>
</dbReference>
<dbReference type="Pfam" id="PF10430">
    <property type="entry name" value="Ig_Tie2_1"/>
    <property type="match status" value="1"/>
</dbReference>
<dbReference type="Pfam" id="PF07714">
    <property type="entry name" value="PK_Tyr_Ser-Thr"/>
    <property type="match status" value="1"/>
</dbReference>
<dbReference type="PIRSF" id="PIRSF000615">
    <property type="entry name" value="TyrPK_CSF1-R"/>
    <property type="match status" value="1"/>
</dbReference>
<dbReference type="PRINTS" id="PR00109">
    <property type="entry name" value="TYRKINASE"/>
</dbReference>
<dbReference type="SMART" id="SM00181">
    <property type="entry name" value="EGF"/>
    <property type="match status" value="3"/>
</dbReference>
<dbReference type="SMART" id="SM00060">
    <property type="entry name" value="FN3"/>
    <property type="match status" value="3"/>
</dbReference>
<dbReference type="SMART" id="SM00220">
    <property type="entry name" value="S_TKc"/>
    <property type="match status" value="1"/>
</dbReference>
<dbReference type="SMART" id="SM00219">
    <property type="entry name" value="TyrKc"/>
    <property type="match status" value="1"/>
</dbReference>
<dbReference type="SUPFAM" id="SSF49265">
    <property type="entry name" value="Fibronectin type III"/>
    <property type="match status" value="2"/>
</dbReference>
<dbReference type="SUPFAM" id="SSF48726">
    <property type="entry name" value="Immunoglobulin"/>
    <property type="match status" value="1"/>
</dbReference>
<dbReference type="SUPFAM" id="SSF56112">
    <property type="entry name" value="Protein kinase-like (PK-like)"/>
    <property type="match status" value="1"/>
</dbReference>
<dbReference type="PROSITE" id="PS00022">
    <property type="entry name" value="EGF_1"/>
    <property type="match status" value="3"/>
</dbReference>
<dbReference type="PROSITE" id="PS01186">
    <property type="entry name" value="EGF_2"/>
    <property type="match status" value="3"/>
</dbReference>
<dbReference type="PROSITE" id="PS50026">
    <property type="entry name" value="EGF_3"/>
    <property type="match status" value="1"/>
</dbReference>
<dbReference type="PROSITE" id="PS50853">
    <property type="entry name" value="FN3"/>
    <property type="match status" value="3"/>
</dbReference>
<dbReference type="PROSITE" id="PS50835">
    <property type="entry name" value="IG_LIKE"/>
    <property type="match status" value="1"/>
</dbReference>
<dbReference type="PROSITE" id="PS00107">
    <property type="entry name" value="PROTEIN_KINASE_ATP"/>
    <property type="match status" value="1"/>
</dbReference>
<dbReference type="PROSITE" id="PS50011">
    <property type="entry name" value="PROTEIN_KINASE_DOM"/>
    <property type="match status" value="1"/>
</dbReference>
<dbReference type="PROSITE" id="PS00109">
    <property type="entry name" value="PROTEIN_KINASE_TYR"/>
    <property type="match status" value="1"/>
</dbReference>
<proteinExistence type="evidence at protein level"/>